<reference key="1">
    <citation type="journal article" date="1990" name="Cell">
        <title>ERD2, a yeast gene required for the receptor-mediated retrieval of luminal ER proteins from the secretory pathway.</title>
        <authorList>
            <person name="Semenza J.C."/>
            <person name="Hardwick K.G."/>
            <person name="Dean N."/>
            <person name="Pelham H.R.B."/>
        </authorList>
    </citation>
    <scope>NUCLEOTIDE SEQUENCE [GENOMIC DNA]</scope>
</reference>
<reference key="2">
    <citation type="journal article" date="1991" name="DNA Seq.">
        <title>A yeast homologue of a proteasome subunit.</title>
        <authorList>
            <person name="Semenza J.C."/>
            <person name="Pelham H.R."/>
        </authorList>
    </citation>
    <scope>NUCLEOTIDE SEQUENCE [GENOMIC DNA]</scope>
</reference>
<reference key="3">
    <citation type="journal article" date="1992" name="Biochem. Biophys. Res. Commun.">
        <title>PRS3 encoding an essential subunit of yeast proteasomes homologous to mammalian proteasome subunit C5.</title>
        <authorList>
            <person name="Lee D.H."/>
            <person name="Tanaka K."/>
            <person name="Tamura T."/>
            <person name="Chung C.H."/>
            <person name="Ichihara A."/>
        </authorList>
    </citation>
    <scope>NUCLEOTIDE SEQUENCE [GENOMIC DNA]</scope>
</reference>
<reference key="4">
    <citation type="journal article" date="1994" name="Yeast">
        <title>The sequence of a 22.4 kb DNA fragment from the left arm of yeast chromosome II reveals homologues to bacterial proline synthetase and murine alpha-adaptin, as well as a new permease and a DNA-binding protein.</title>
        <authorList>
            <person name="de Wergifosse P."/>
            <person name="Jacques B."/>
            <person name="Jonniaux J.-L."/>
            <person name="Purnelle B."/>
            <person name="Skala J."/>
            <person name="Goffeau A."/>
        </authorList>
    </citation>
    <scope>NUCLEOTIDE SEQUENCE [GENOMIC DNA]</scope>
    <source>
        <strain>ATCC 204508 / S288c</strain>
    </source>
</reference>
<reference key="5">
    <citation type="journal article" date="1994" name="EMBO J.">
        <title>Complete DNA sequence of yeast chromosome II.</title>
        <authorList>
            <person name="Feldmann H."/>
            <person name="Aigle M."/>
            <person name="Aljinovic G."/>
            <person name="Andre B."/>
            <person name="Baclet M.C."/>
            <person name="Barthe C."/>
            <person name="Baur A."/>
            <person name="Becam A.-M."/>
            <person name="Biteau N."/>
            <person name="Boles E."/>
            <person name="Brandt T."/>
            <person name="Brendel M."/>
            <person name="Brueckner M."/>
            <person name="Bussereau F."/>
            <person name="Christiansen C."/>
            <person name="Contreras R."/>
            <person name="Crouzet M."/>
            <person name="Cziepluch C."/>
            <person name="Demolis N."/>
            <person name="Delaveau T."/>
            <person name="Doignon F."/>
            <person name="Domdey H."/>
            <person name="Duesterhus S."/>
            <person name="Dubois E."/>
            <person name="Dujon B."/>
            <person name="El Bakkoury M."/>
            <person name="Entian K.-D."/>
            <person name="Feuermann M."/>
            <person name="Fiers W."/>
            <person name="Fobo G.M."/>
            <person name="Fritz C."/>
            <person name="Gassenhuber J."/>
            <person name="Glansdorff N."/>
            <person name="Goffeau A."/>
            <person name="Grivell L.A."/>
            <person name="de Haan M."/>
            <person name="Hein C."/>
            <person name="Herbert C.J."/>
            <person name="Hollenberg C.P."/>
            <person name="Holmstroem K."/>
            <person name="Jacq C."/>
            <person name="Jacquet M."/>
            <person name="Jauniaux J.-C."/>
            <person name="Jonniaux J.-L."/>
            <person name="Kallesoee T."/>
            <person name="Kiesau P."/>
            <person name="Kirchrath L."/>
            <person name="Koetter P."/>
            <person name="Korol S."/>
            <person name="Liebl S."/>
            <person name="Logghe M."/>
            <person name="Lohan A.J.E."/>
            <person name="Louis E.J."/>
            <person name="Li Z.Y."/>
            <person name="Maat M.J."/>
            <person name="Mallet L."/>
            <person name="Mannhaupt G."/>
            <person name="Messenguy F."/>
            <person name="Miosga T."/>
            <person name="Molemans F."/>
            <person name="Mueller S."/>
            <person name="Nasr F."/>
            <person name="Obermaier B."/>
            <person name="Perea J."/>
            <person name="Pierard A."/>
            <person name="Piravandi E."/>
            <person name="Pohl F.M."/>
            <person name="Pohl T.M."/>
            <person name="Potier S."/>
            <person name="Proft M."/>
            <person name="Purnelle B."/>
            <person name="Ramezani Rad M."/>
            <person name="Rieger M."/>
            <person name="Rose M."/>
            <person name="Schaaff-Gerstenschlaeger I."/>
            <person name="Scherens B."/>
            <person name="Schwarzlose C."/>
            <person name="Skala J."/>
            <person name="Slonimski P.P."/>
            <person name="Smits P.H.M."/>
            <person name="Souciet J.-L."/>
            <person name="Steensma H.Y."/>
            <person name="Stucka R."/>
            <person name="Urrestarazu L.A."/>
            <person name="van der Aart Q.J.M."/>
            <person name="Van Dyck L."/>
            <person name="Vassarotti A."/>
            <person name="Vetter I."/>
            <person name="Vierendeels F."/>
            <person name="Vissers S."/>
            <person name="Wagner G."/>
            <person name="de Wergifosse P."/>
            <person name="Wolfe K.H."/>
            <person name="Zagulski M."/>
            <person name="Zimmermann F.K."/>
            <person name="Mewes H.-W."/>
            <person name="Kleine K."/>
        </authorList>
    </citation>
    <scope>NUCLEOTIDE SEQUENCE [LARGE SCALE GENOMIC DNA]</scope>
    <source>
        <strain>ATCC 204508 / S288c</strain>
    </source>
</reference>
<reference key="6">
    <citation type="journal article" date="2014" name="G3 (Bethesda)">
        <title>The reference genome sequence of Saccharomyces cerevisiae: Then and now.</title>
        <authorList>
            <person name="Engel S.R."/>
            <person name="Dietrich F.S."/>
            <person name="Fisk D.G."/>
            <person name="Binkley G."/>
            <person name="Balakrishnan R."/>
            <person name="Costanzo M.C."/>
            <person name="Dwight S.S."/>
            <person name="Hitz B.C."/>
            <person name="Karra K."/>
            <person name="Nash R.S."/>
            <person name="Weng S."/>
            <person name="Wong E.D."/>
            <person name="Lloyd P."/>
            <person name="Skrzypek M.S."/>
            <person name="Miyasato S.R."/>
            <person name="Simison M."/>
            <person name="Cherry J.M."/>
        </authorList>
    </citation>
    <scope>GENOME REANNOTATION</scope>
    <source>
        <strain>ATCC 204508 / S288c</strain>
    </source>
</reference>
<reference key="7">
    <citation type="journal article" date="2007" name="Genome Res.">
        <title>Approaching a complete repository of sequence-verified protein-encoding clones for Saccharomyces cerevisiae.</title>
        <authorList>
            <person name="Hu Y."/>
            <person name="Rolfs A."/>
            <person name="Bhullar B."/>
            <person name="Murthy T.V.S."/>
            <person name="Zhu C."/>
            <person name="Berger M.F."/>
            <person name="Camargo A.A."/>
            <person name="Kelley F."/>
            <person name="McCarron S."/>
            <person name="Jepson D."/>
            <person name="Richardson A."/>
            <person name="Raphael J."/>
            <person name="Moreira D."/>
            <person name="Taycher E."/>
            <person name="Zuo D."/>
            <person name="Mohr S."/>
            <person name="Kane M.F."/>
            <person name="Williamson J."/>
            <person name="Simpson A.J.G."/>
            <person name="Bulyk M.L."/>
            <person name="Harlow E."/>
            <person name="Marsischky G."/>
            <person name="Kolodner R.D."/>
            <person name="LaBaer J."/>
        </authorList>
    </citation>
    <scope>NUCLEOTIDE SEQUENCE [GENOMIC DNA]</scope>
    <source>
        <strain>ATCC 204508 / S288c</strain>
    </source>
</reference>
<reference key="8">
    <citation type="journal article" date="1997" name="Nature">
        <title>Structure of 20S proteasome from yeast at 2.4-A resolution.</title>
        <authorList>
            <person name="Groll M."/>
            <person name="Ditzel L."/>
            <person name="Loewe J."/>
            <person name="Stock D."/>
            <person name="Bochtler M."/>
            <person name="Bartunik H.D."/>
            <person name="Huber R."/>
        </authorList>
    </citation>
    <scope>X-RAY CRYSTALLOGRAPHY (1.9 ANGSTROMS) OF 20-241 OF COMPLEX WITH THE 20S PROTEASOME</scope>
    <scope>PROTEOLYTIC PROCESSING</scope>
</reference>
<reference key="9">
    <citation type="journal article" date="2000" name="Nature">
        <title>Structural basis for the activation of 20S proteasomes by 11S regulators.</title>
        <authorList>
            <person name="Whitby F.G."/>
            <person name="Masters E.I."/>
            <person name="Kramer L."/>
            <person name="Knowlton J.R."/>
            <person name="Yao Y."/>
            <person name="Wang C.C."/>
            <person name="Hill C.P."/>
        </authorList>
    </citation>
    <scope>X-RAY CRYSTALLOGRAPHY (3.2 ANGSTROMS) OF 20-241 OF COMPLEX WITH THE 20S PROTEASOME AND A 11S REGULATORY COMPLEX</scope>
</reference>
<reference key="10">
    <citation type="journal article" date="2000" name="Nat. Struct. Biol.">
        <title>A gated channel into the proteasome core particle.</title>
        <authorList>
            <person name="Groll M."/>
            <person name="Bajorek M."/>
            <person name="Koehler A."/>
            <person name="Moroder L."/>
            <person name="Rubin D.M."/>
            <person name="Huber R."/>
            <person name="Glickman M.H."/>
            <person name="Finley D."/>
        </authorList>
    </citation>
    <scope>X-RAY CRYSTALLOGRAPHY (2.4 ANGSTROMS) OF COMPLEX WITH THE 20S PROTEASOME</scope>
</reference>
<reference key="11">
    <citation type="journal article" date="2006" name="Chem. Biol.">
        <title>TMC-95-based inhibitor design provides evidence for the catalytic versatility of the proteasome.</title>
        <authorList>
            <person name="Groll M."/>
            <person name="Goetz M."/>
            <person name="Kaiser M."/>
            <person name="Weyher E."/>
            <person name="Moroder L."/>
        </authorList>
    </citation>
    <scope>X-RAY CRYSTALLOGRAPHY (2.81 ANGSTROMS) OF 20-241 OF COMPLEX WITH THE 20S PROTEASOME AND A TMC-95-BASED INHIBITOR</scope>
</reference>
<reference key="12">
    <citation type="journal article" date="2006" name="J. Am. Chem. Soc.">
        <title>Crystal structures of salinosporamide A (NPI-0052) and B (NPI-0047) in complex with the 20S proteasome reveal important consequences of beta-lactone ring opening and a mechanism for irreversible binding.</title>
        <authorList>
            <person name="Groll M."/>
            <person name="Huber R."/>
            <person name="Potts B.C.M."/>
        </authorList>
    </citation>
    <scope>X-RAY CRYSTALLOGRAPHY (2.8 ANGSTROMS) OF 20-241 OF COMPLEX WITH THE 20S PROTEASOME AND SALINOSPORAMIDE</scope>
</reference>
<reference key="13">
    <citation type="journal article" date="2006" name="Structure">
        <title>Crystal structure of the boronic acid-based proteasome inhibitor bortezomib in complex with the yeast 20S proteasome.</title>
        <authorList>
            <person name="Groll M."/>
            <person name="Berkers C.R."/>
            <person name="Ploegh H.L."/>
            <person name="Ovaa H."/>
        </authorList>
    </citation>
    <scope>X-RAY CRYSTALLOGRAPHY (2.8 ANGSTROMS) OF 20-241 OF COMPLEX WITH THE 20S PROTEASOME AND BORTEZOMIB</scope>
</reference>
<reference key="14">
    <citation type="journal article" date="2010" name="Mol. Cell">
        <title>Structure of a Blm10 complex reveals common mechanisms for proteasome binding and gate opening.</title>
        <authorList>
            <person name="Sadre-Bazzaz K."/>
            <person name="Whitby F.G."/>
            <person name="Robinson H."/>
            <person name="Formosa T."/>
            <person name="Hill C.P."/>
        </authorList>
    </citation>
    <scope>X-RAY CRYSTALLOGRAPHY (3.0 ANGSTROMS) OF 20-241 IN COMPLEX WITH THE PROTEASOME</scope>
</reference>
<reference key="15">
    <citation type="journal article" date="2012" name="Proc. Natl. Acad. Sci. U.S.A.">
        <title>Near-atomic resolution structural model of the yeast 26S proteasome.</title>
        <authorList>
            <person name="Beck F."/>
            <person name="Unverdorben P."/>
            <person name="Bohn S."/>
            <person name="Schweitzer A."/>
            <person name="Pfeifer G."/>
            <person name="Sakata E."/>
            <person name="Nickell S."/>
            <person name="Plitzko J.M."/>
            <person name="Villa E."/>
            <person name="Baumeister W."/>
            <person name="Forster F."/>
        </authorList>
    </citation>
    <scope>STRUCTURE BY ELECTRON MICROSCOPY (7.4 ANGSTROMS) OF THE 26S PROTEASOME</scope>
</reference>
<gene>
    <name type="primary">PRE7</name>
    <name type="synonym">PRS3</name>
    <name type="synonym">PTS1</name>
    <name type="ordered locus">YBL041W</name>
    <name type="ORF">YBL0407</name>
</gene>
<name>PSB6_YEAST</name>
<protein>
    <recommendedName>
        <fullName>Proteasome subunit beta type-6</fullName>
    </recommendedName>
    <alternativeName>
        <fullName>Multicatalytic endopeptidase complex subunit C5</fullName>
    </alternativeName>
    <alternativeName>
        <fullName>Proteasome component C5</fullName>
    </alternativeName>
</protein>
<sequence>MATIASEYSSEASNTPIEHQFNPYGDNGGTILGIAGEDFAVLAGDTRNITDYSINSRYEPKVFDCGDNIVMSANGFAADGDALVKRFKNSVKWYHFDHNDKKLSINSAARNIQHLLYGKRFFPYYVHTIIAGLDEDGKGAVYSFDPVGSYEREQCRAGGAAASLIMPFLDNQVNFKNQYEPGTNGKVKKPLKYLSVEEVIKLVRDSFTSATERHIQVGDGLEILIVTKDGVRKEFYELKRD</sequence>
<feature type="propeptide" id="PRO_0000331489">
    <location>
        <begin position="1"/>
        <end position="19"/>
    </location>
</feature>
<feature type="chain" id="PRO_0000148042" description="Proteasome subunit beta type-6">
    <location>
        <begin position="20"/>
        <end position="241"/>
    </location>
</feature>
<feature type="strand" evidence="4">
    <location>
        <begin position="30"/>
        <end position="35"/>
    </location>
</feature>
<feature type="strand" evidence="4">
    <location>
        <begin position="40"/>
        <end position="45"/>
    </location>
</feature>
<feature type="strand" evidence="4">
    <location>
        <begin position="48"/>
        <end position="50"/>
    </location>
</feature>
<feature type="strand" evidence="4">
    <location>
        <begin position="53"/>
        <end position="57"/>
    </location>
</feature>
<feature type="strand" evidence="6">
    <location>
        <begin position="62"/>
        <end position="64"/>
    </location>
</feature>
<feature type="strand" evidence="4">
    <location>
        <begin position="70"/>
        <end position="76"/>
    </location>
</feature>
<feature type="helix" evidence="4">
    <location>
        <begin position="77"/>
        <end position="97"/>
    </location>
</feature>
<feature type="turn" evidence="4">
    <location>
        <begin position="98"/>
        <end position="100"/>
    </location>
</feature>
<feature type="helix" evidence="4">
    <location>
        <begin position="105"/>
        <end position="117"/>
    </location>
</feature>
<feature type="turn" evidence="4">
    <location>
        <begin position="118"/>
        <end position="121"/>
    </location>
</feature>
<feature type="strand" evidence="4">
    <location>
        <begin position="126"/>
        <end position="133"/>
    </location>
</feature>
<feature type="strand" evidence="4">
    <location>
        <begin position="139"/>
        <end position="144"/>
    </location>
</feature>
<feature type="strand" evidence="7">
    <location>
        <begin position="146"/>
        <end position="148"/>
    </location>
</feature>
<feature type="strand" evidence="4">
    <location>
        <begin position="150"/>
        <end position="159"/>
    </location>
</feature>
<feature type="helix" evidence="4">
    <location>
        <begin position="162"/>
        <end position="172"/>
    </location>
</feature>
<feature type="strand" evidence="7">
    <location>
        <begin position="183"/>
        <end position="185"/>
    </location>
</feature>
<feature type="strand" evidence="5">
    <location>
        <begin position="186"/>
        <end position="188"/>
    </location>
</feature>
<feature type="helix" evidence="6">
    <location>
        <begin position="191"/>
        <end position="193"/>
    </location>
</feature>
<feature type="helix" evidence="4">
    <location>
        <begin position="196"/>
        <end position="213"/>
    </location>
</feature>
<feature type="strand" evidence="3">
    <location>
        <begin position="214"/>
        <end position="217"/>
    </location>
</feature>
<feature type="strand" evidence="4">
    <location>
        <begin position="219"/>
        <end position="227"/>
    </location>
</feature>
<feature type="strand" evidence="4">
    <location>
        <begin position="230"/>
        <end position="237"/>
    </location>
</feature>
<dbReference type="EMBL" id="M34777">
    <property type="protein sequence ID" value="AAA68908.1"/>
    <property type="molecule type" value="Genomic_DNA"/>
</dbReference>
<dbReference type="EMBL" id="D00845">
    <property type="protein sequence ID" value="BAA00725.1"/>
    <property type="molecule type" value="Genomic_DNA"/>
</dbReference>
<dbReference type="EMBL" id="X78214">
    <property type="protein sequence ID" value="CAA55053.1"/>
    <property type="molecule type" value="Genomic_DNA"/>
</dbReference>
<dbReference type="EMBL" id="Z35802">
    <property type="protein sequence ID" value="CAA84861.1"/>
    <property type="molecule type" value="Genomic_DNA"/>
</dbReference>
<dbReference type="EMBL" id="AY558462">
    <property type="protein sequence ID" value="AAS56788.1"/>
    <property type="molecule type" value="Genomic_DNA"/>
</dbReference>
<dbReference type="EMBL" id="BK006936">
    <property type="protein sequence ID" value="DAA07077.1"/>
    <property type="molecule type" value="Genomic_DNA"/>
</dbReference>
<dbReference type="PIR" id="S42436">
    <property type="entry name" value="S42436"/>
</dbReference>
<dbReference type="RefSeq" id="NP_009512.1">
    <property type="nucleotide sequence ID" value="NM_001178281.1"/>
</dbReference>
<dbReference type="PDB" id="1FNT">
    <property type="method" value="X-ray"/>
    <property type="resolution" value="3.20 A"/>
    <property type="chains" value="M/a=20-240"/>
</dbReference>
<dbReference type="PDB" id="1G0U">
    <property type="method" value="X-ray"/>
    <property type="resolution" value="2.40 A"/>
    <property type="chains" value="L/Z=1-241"/>
</dbReference>
<dbReference type="PDB" id="1G65">
    <property type="method" value="X-ray"/>
    <property type="resolution" value="2.25 A"/>
    <property type="chains" value="L/Z=20-241"/>
</dbReference>
<dbReference type="PDB" id="1JD2">
    <property type="method" value="X-ray"/>
    <property type="resolution" value="3.00 A"/>
    <property type="chains" value="L/S=20-241"/>
</dbReference>
<dbReference type="PDB" id="1RYP">
    <property type="method" value="X-ray"/>
    <property type="resolution" value="1.90 A"/>
    <property type="chains" value="1/M=20-241"/>
</dbReference>
<dbReference type="PDB" id="1Z7Q">
    <property type="method" value="X-ray"/>
    <property type="resolution" value="3.22 A"/>
    <property type="chains" value="M/a=20-241"/>
</dbReference>
<dbReference type="PDB" id="2F16">
    <property type="method" value="X-ray"/>
    <property type="resolution" value="2.80 A"/>
    <property type="chains" value="L/Z=20-241"/>
</dbReference>
<dbReference type="PDB" id="2FAK">
    <property type="method" value="X-ray"/>
    <property type="resolution" value="2.80 A"/>
    <property type="chains" value="L/Z=20-241"/>
</dbReference>
<dbReference type="PDB" id="2GPL">
    <property type="method" value="X-ray"/>
    <property type="resolution" value="2.81 A"/>
    <property type="chains" value="L/Z=20-241"/>
</dbReference>
<dbReference type="PDB" id="2ZCY">
    <property type="method" value="X-ray"/>
    <property type="resolution" value="2.90 A"/>
    <property type="chains" value="L/Z=1-241"/>
</dbReference>
<dbReference type="PDB" id="3BDM">
    <property type="method" value="X-ray"/>
    <property type="resolution" value="2.70 A"/>
    <property type="chains" value="L/Z=1-241"/>
</dbReference>
<dbReference type="PDB" id="3D29">
    <property type="method" value="X-ray"/>
    <property type="resolution" value="2.60 A"/>
    <property type="chains" value="L/Z=20-241"/>
</dbReference>
<dbReference type="PDB" id="3DY3">
    <property type="method" value="X-ray"/>
    <property type="resolution" value="2.81 A"/>
    <property type="chains" value="L/Z=20-241"/>
</dbReference>
<dbReference type="PDB" id="3DY4">
    <property type="method" value="X-ray"/>
    <property type="resolution" value="2.80 A"/>
    <property type="chains" value="L/Z=20-241"/>
</dbReference>
<dbReference type="PDB" id="3E47">
    <property type="method" value="X-ray"/>
    <property type="resolution" value="3.00 A"/>
    <property type="chains" value="L/Z=20-241"/>
</dbReference>
<dbReference type="PDB" id="3GPJ">
    <property type="method" value="X-ray"/>
    <property type="resolution" value="2.70 A"/>
    <property type="chains" value="L/Z=20-241"/>
</dbReference>
<dbReference type="PDB" id="3GPT">
    <property type="method" value="X-ray"/>
    <property type="resolution" value="2.41 A"/>
    <property type="chains" value="L/Z=20-241"/>
</dbReference>
<dbReference type="PDB" id="3GPW">
    <property type="method" value="X-ray"/>
    <property type="resolution" value="2.50 A"/>
    <property type="chains" value="L/Z=20-241"/>
</dbReference>
<dbReference type="PDB" id="3HYE">
    <property type="method" value="X-ray"/>
    <property type="resolution" value="2.50 A"/>
    <property type="chains" value="L/Z=20-241"/>
</dbReference>
<dbReference type="PDB" id="3JCO">
    <property type="method" value="EM"/>
    <property type="resolution" value="4.80 A"/>
    <property type="chains" value="1/8=1-241"/>
</dbReference>
<dbReference type="PDB" id="3JCP">
    <property type="method" value="EM"/>
    <property type="resolution" value="4.60 A"/>
    <property type="chains" value="1/8=1-241"/>
</dbReference>
<dbReference type="PDB" id="3MG0">
    <property type="method" value="X-ray"/>
    <property type="resolution" value="2.68 A"/>
    <property type="chains" value="L/Z=20-241"/>
</dbReference>
<dbReference type="PDB" id="3MG4">
    <property type="method" value="X-ray"/>
    <property type="resolution" value="3.11 A"/>
    <property type="chains" value="L/Z=20-241"/>
</dbReference>
<dbReference type="PDB" id="3MG6">
    <property type="method" value="X-ray"/>
    <property type="resolution" value="2.60 A"/>
    <property type="chains" value="L/Z=1-241"/>
</dbReference>
<dbReference type="PDB" id="3MG7">
    <property type="method" value="X-ray"/>
    <property type="resolution" value="2.78 A"/>
    <property type="chains" value="L/Z=1-241"/>
</dbReference>
<dbReference type="PDB" id="3MG8">
    <property type="method" value="X-ray"/>
    <property type="resolution" value="2.59 A"/>
    <property type="chains" value="L/Z=1-241"/>
</dbReference>
<dbReference type="PDB" id="3NZJ">
    <property type="method" value="X-ray"/>
    <property type="resolution" value="2.40 A"/>
    <property type="chains" value="L/Z=1-241"/>
</dbReference>
<dbReference type="PDB" id="3NZW">
    <property type="method" value="X-ray"/>
    <property type="resolution" value="2.50 A"/>
    <property type="chains" value="L/Z=1-241"/>
</dbReference>
<dbReference type="PDB" id="3NZX">
    <property type="method" value="X-ray"/>
    <property type="resolution" value="2.70 A"/>
    <property type="chains" value="L/Z=1-241"/>
</dbReference>
<dbReference type="PDB" id="3OEU">
    <property type="method" value="X-ray"/>
    <property type="resolution" value="2.60 A"/>
    <property type="chains" value="L/Z=20-241"/>
</dbReference>
<dbReference type="PDB" id="3OEV">
    <property type="method" value="X-ray"/>
    <property type="resolution" value="2.85 A"/>
    <property type="chains" value="L/Z=20-241"/>
</dbReference>
<dbReference type="PDB" id="3OKJ">
    <property type="method" value="X-ray"/>
    <property type="resolution" value="2.70 A"/>
    <property type="chains" value="L/Z=20-241"/>
</dbReference>
<dbReference type="PDB" id="3SDI">
    <property type="method" value="X-ray"/>
    <property type="resolution" value="2.65 A"/>
    <property type="chains" value="L/Z=20-241"/>
</dbReference>
<dbReference type="PDB" id="3SDK">
    <property type="method" value="X-ray"/>
    <property type="resolution" value="2.70 A"/>
    <property type="chains" value="L/Z=20-241"/>
</dbReference>
<dbReference type="PDB" id="3SHJ">
    <property type="method" value="X-ray"/>
    <property type="resolution" value="2.80 A"/>
    <property type="chains" value="L/Z=20-241"/>
</dbReference>
<dbReference type="PDB" id="3TDD">
    <property type="method" value="X-ray"/>
    <property type="resolution" value="2.70 A"/>
    <property type="chains" value="L/Z=20-241"/>
</dbReference>
<dbReference type="PDB" id="3UN4">
    <property type="method" value="X-ray"/>
    <property type="resolution" value="3.40 A"/>
    <property type="chains" value="L/Z=20-241"/>
</dbReference>
<dbReference type="PDB" id="3UN8">
    <property type="method" value="X-ray"/>
    <property type="resolution" value="2.70 A"/>
    <property type="chains" value="L/Z=20-241"/>
</dbReference>
<dbReference type="PDB" id="3WXR">
    <property type="method" value="X-ray"/>
    <property type="resolution" value="3.15 A"/>
    <property type="chains" value="1/M=1-241"/>
</dbReference>
<dbReference type="PDB" id="4CR2">
    <property type="method" value="EM"/>
    <property type="resolution" value="7.70 A"/>
    <property type="chains" value="6=1-241"/>
</dbReference>
<dbReference type="PDB" id="4CR3">
    <property type="method" value="EM"/>
    <property type="resolution" value="9.30 A"/>
    <property type="chains" value="6=1-241"/>
</dbReference>
<dbReference type="PDB" id="4CR4">
    <property type="method" value="EM"/>
    <property type="resolution" value="8.80 A"/>
    <property type="chains" value="6=1-241"/>
</dbReference>
<dbReference type="PDB" id="4EU2">
    <property type="method" value="X-ray"/>
    <property type="resolution" value="2.51 A"/>
    <property type="chains" value="1/M=20-241"/>
</dbReference>
<dbReference type="PDB" id="4FZC">
    <property type="method" value="X-ray"/>
    <property type="resolution" value="2.80 A"/>
    <property type="chains" value="L/Z=20-241"/>
</dbReference>
<dbReference type="PDB" id="4FZG">
    <property type="method" value="X-ray"/>
    <property type="resolution" value="3.00 A"/>
    <property type="chains" value="L/Z=20-241"/>
</dbReference>
<dbReference type="PDB" id="4G4S">
    <property type="method" value="X-ray"/>
    <property type="resolution" value="2.49 A"/>
    <property type="chains" value="M=20-241"/>
</dbReference>
<dbReference type="PDB" id="4GK7">
    <property type="method" value="X-ray"/>
    <property type="resolution" value="2.80 A"/>
    <property type="chains" value="L/Z=20-241"/>
</dbReference>
<dbReference type="PDB" id="4HNP">
    <property type="method" value="X-ray"/>
    <property type="resolution" value="2.80 A"/>
    <property type="chains" value="L/Z=20-241"/>
</dbReference>
<dbReference type="PDB" id="4HRC">
    <property type="method" value="X-ray"/>
    <property type="resolution" value="2.80 A"/>
    <property type="chains" value="L/Z=20-241"/>
</dbReference>
<dbReference type="PDB" id="4HRD">
    <property type="method" value="X-ray"/>
    <property type="resolution" value="2.80 A"/>
    <property type="chains" value="L/Z=20-241"/>
</dbReference>
<dbReference type="PDB" id="4INR">
    <property type="method" value="X-ray"/>
    <property type="resolution" value="2.70 A"/>
    <property type="chains" value="L/Z=20-241"/>
</dbReference>
<dbReference type="PDB" id="4INT">
    <property type="method" value="X-ray"/>
    <property type="resolution" value="2.90 A"/>
    <property type="chains" value="L/Z=20-241"/>
</dbReference>
<dbReference type="PDB" id="4INU">
    <property type="method" value="X-ray"/>
    <property type="resolution" value="3.10 A"/>
    <property type="chains" value="L/Z=20-241"/>
</dbReference>
<dbReference type="PDB" id="4J70">
    <property type="method" value="X-ray"/>
    <property type="resolution" value="2.80 A"/>
    <property type="chains" value="L/Z=20-241"/>
</dbReference>
<dbReference type="PDB" id="4JSQ">
    <property type="method" value="X-ray"/>
    <property type="resolution" value="2.80 A"/>
    <property type="chains" value="L/Z=20-241"/>
</dbReference>
<dbReference type="PDB" id="4JSU">
    <property type="method" value="X-ray"/>
    <property type="resolution" value="2.90 A"/>
    <property type="chains" value="L/Z=20-241"/>
</dbReference>
<dbReference type="PDB" id="4JT0">
    <property type="method" value="X-ray"/>
    <property type="resolution" value="3.10 A"/>
    <property type="chains" value="L/Z=20-241"/>
</dbReference>
<dbReference type="PDB" id="4LQI">
    <property type="method" value="X-ray"/>
    <property type="resolution" value="2.70 A"/>
    <property type="chains" value="L/Z=20-241"/>
</dbReference>
<dbReference type="PDB" id="4LTC">
    <property type="method" value="X-ray"/>
    <property type="resolution" value="2.50 A"/>
    <property type="chains" value="L/Z=20-241"/>
</dbReference>
<dbReference type="PDB" id="4NNN">
    <property type="method" value="X-ray"/>
    <property type="resolution" value="2.50 A"/>
    <property type="chains" value="L/Z=20-241"/>
</dbReference>
<dbReference type="PDB" id="4NNW">
    <property type="method" value="X-ray"/>
    <property type="resolution" value="2.60 A"/>
    <property type="chains" value="L/Z=20-241"/>
</dbReference>
<dbReference type="PDB" id="4NO1">
    <property type="method" value="X-ray"/>
    <property type="resolution" value="2.50 A"/>
    <property type="chains" value="L/Z=20-241"/>
</dbReference>
<dbReference type="PDB" id="4NO6">
    <property type="method" value="X-ray"/>
    <property type="resolution" value="3.00 A"/>
    <property type="chains" value="L/Z=20-241"/>
</dbReference>
<dbReference type="PDB" id="4NO8">
    <property type="method" value="X-ray"/>
    <property type="resolution" value="2.70 A"/>
    <property type="chains" value="L/Z=20-241"/>
</dbReference>
<dbReference type="PDB" id="4NO9">
    <property type="method" value="X-ray"/>
    <property type="resolution" value="2.90 A"/>
    <property type="chains" value="L/Z=20-241"/>
</dbReference>
<dbReference type="PDB" id="4Q1S">
    <property type="method" value="X-ray"/>
    <property type="resolution" value="2.60 A"/>
    <property type="chains" value="L/Z=20-241"/>
</dbReference>
<dbReference type="PDB" id="4QBY">
    <property type="method" value="X-ray"/>
    <property type="resolution" value="3.00 A"/>
    <property type="chains" value="L/Z=20-241"/>
</dbReference>
<dbReference type="PDB" id="4QLQ">
    <property type="method" value="X-ray"/>
    <property type="resolution" value="2.40 A"/>
    <property type="chains" value="L/Z=20-241"/>
</dbReference>
<dbReference type="PDB" id="4QLS">
    <property type="method" value="X-ray"/>
    <property type="resolution" value="2.80 A"/>
    <property type="chains" value="L/Z=20-241"/>
</dbReference>
<dbReference type="PDB" id="4QLT">
    <property type="method" value="X-ray"/>
    <property type="resolution" value="2.80 A"/>
    <property type="chains" value="L/Z=20-241"/>
</dbReference>
<dbReference type="PDB" id="4QLU">
    <property type="method" value="X-ray"/>
    <property type="resolution" value="2.80 A"/>
    <property type="chains" value="L/Z=20-241"/>
</dbReference>
<dbReference type="PDB" id="4QLV">
    <property type="method" value="X-ray"/>
    <property type="resolution" value="2.90 A"/>
    <property type="chains" value="L/Z=20-241"/>
</dbReference>
<dbReference type="PDB" id="4QUX">
    <property type="method" value="X-ray"/>
    <property type="resolution" value="3.00 A"/>
    <property type="chains" value="L/Z=20-241"/>
</dbReference>
<dbReference type="PDB" id="4QUY">
    <property type="method" value="X-ray"/>
    <property type="resolution" value="2.80 A"/>
    <property type="chains" value="L/Z=20-241"/>
</dbReference>
<dbReference type="PDB" id="4QV0">
    <property type="method" value="X-ray"/>
    <property type="resolution" value="3.10 A"/>
    <property type="chains" value="L/Z=20-241"/>
</dbReference>
<dbReference type="PDB" id="4QV1">
    <property type="method" value="X-ray"/>
    <property type="resolution" value="2.50 A"/>
    <property type="chains" value="L/Z=20-241"/>
</dbReference>
<dbReference type="PDB" id="4QV3">
    <property type="method" value="X-ray"/>
    <property type="resolution" value="3.00 A"/>
    <property type="chains" value="L/Z=20-241"/>
</dbReference>
<dbReference type="PDB" id="4QV4">
    <property type="method" value="X-ray"/>
    <property type="resolution" value="2.70 A"/>
    <property type="chains" value="L/Z=20-241"/>
</dbReference>
<dbReference type="PDB" id="4QV5">
    <property type="method" value="X-ray"/>
    <property type="resolution" value="2.70 A"/>
    <property type="chains" value="L/Z=20-241"/>
</dbReference>
<dbReference type="PDB" id="4QV6">
    <property type="method" value="X-ray"/>
    <property type="resolution" value="2.80 A"/>
    <property type="chains" value="L/Z=20-241"/>
</dbReference>
<dbReference type="PDB" id="4QV7">
    <property type="method" value="X-ray"/>
    <property type="resolution" value="2.60 A"/>
    <property type="chains" value="L/Z=20-241"/>
</dbReference>
<dbReference type="PDB" id="4QV8">
    <property type="method" value="X-ray"/>
    <property type="resolution" value="2.90 A"/>
    <property type="chains" value="L/Z=20-241"/>
</dbReference>
<dbReference type="PDB" id="4QV9">
    <property type="method" value="X-ray"/>
    <property type="resolution" value="2.60 A"/>
    <property type="chains" value="L/Z=20-241"/>
</dbReference>
<dbReference type="PDB" id="4QVL">
    <property type="method" value="X-ray"/>
    <property type="resolution" value="2.80 A"/>
    <property type="chains" value="L/Z=20-241"/>
</dbReference>
<dbReference type="PDB" id="4QVM">
    <property type="method" value="X-ray"/>
    <property type="resolution" value="2.80 A"/>
    <property type="chains" value="L/Z=20-241"/>
</dbReference>
<dbReference type="PDB" id="4QVN">
    <property type="method" value="X-ray"/>
    <property type="resolution" value="2.90 A"/>
    <property type="chains" value="L/Z=20-241"/>
</dbReference>
<dbReference type="PDB" id="4QVP">
    <property type="method" value="X-ray"/>
    <property type="resolution" value="2.30 A"/>
    <property type="chains" value="L/Z=20-241"/>
</dbReference>
<dbReference type="PDB" id="4QVQ">
    <property type="method" value="X-ray"/>
    <property type="resolution" value="2.60 A"/>
    <property type="chains" value="L/Z=20-241"/>
</dbReference>
<dbReference type="PDB" id="4QVV">
    <property type="method" value="X-ray"/>
    <property type="resolution" value="2.80 A"/>
    <property type="chains" value="L/Z=20-241"/>
</dbReference>
<dbReference type="PDB" id="4QVW">
    <property type="method" value="X-ray"/>
    <property type="resolution" value="3.00 A"/>
    <property type="chains" value="L/Z=20-241"/>
</dbReference>
<dbReference type="PDB" id="4QVY">
    <property type="method" value="X-ray"/>
    <property type="resolution" value="2.51 A"/>
    <property type="chains" value="L/Z=20-241"/>
</dbReference>
<dbReference type="PDB" id="4QW0">
    <property type="method" value="X-ray"/>
    <property type="resolution" value="2.90 A"/>
    <property type="chains" value="L/Z=20-241"/>
</dbReference>
<dbReference type="PDB" id="4QW1">
    <property type="method" value="X-ray"/>
    <property type="resolution" value="2.90 A"/>
    <property type="chains" value="L/Z=20-241"/>
</dbReference>
<dbReference type="PDB" id="4QW3">
    <property type="method" value="X-ray"/>
    <property type="resolution" value="2.90 A"/>
    <property type="chains" value="L/Z=20-241"/>
</dbReference>
<dbReference type="PDB" id="4QW4">
    <property type="method" value="X-ray"/>
    <property type="resolution" value="2.80 A"/>
    <property type="chains" value="L/Z=20-241"/>
</dbReference>
<dbReference type="PDB" id="4QW5">
    <property type="method" value="X-ray"/>
    <property type="resolution" value="3.00 A"/>
    <property type="chains" value="L/Z=20-241"/>
</dbReference>
<dbReference type="PDB" id="4QW6">
    <property type="method" value="X-ray"/>
    <property type="resolution" value="2.90 A"/>
    <property type="chains" value="L/Z=20-241"/>
</dbReference>
<dbReference type="PDB" id="4QW7">
    <property type="method" value="X-ray"/>
    <property type="resolution" value="2.70 A"/>
    <property type="chains" value="L/Z=20-241"/>
</dbReference>
<dbReference type="PDB" id="4QWF">
    <property type="method" value="X-ray"/>
    <property type="resolution" value="3.00 A"/>
    <property type="chains" value="L/Z=20-241"/>
</dbReference>
<dbReference type="PDB" id="4QWG">
    <property type="method" value="X-ray"/>
    <property type="resolution" value="2.60 A"/>
    <property type="chains" value="L/Z=20-241"/>
</dbReference>
<dbReference type="PDB" id="4QWI">
    <property type="method" value="X-ray"/>
    <property type="resolution" value="2.60 A"/>
    <property type="chains" value="L/Z=20-241"/>
</dbReference>
<dbReference type="PDB" id="4QWJ">
    <property type="method" value="X-ray"/>
    <property type="resolution" value="2.90 A"/>
    <property type="chains" value="L/Z=20-241"/>
</dbReference>
<dbReference type="PDB" id="4QWK">
    <property type="method" value="X-ray"/>
    <property type="resolution" value="2.80 A"/>
    <property type="chains" value="L/Z=20-241"/>
</dbReference>
<dbReference type="PDB" id="4QWL">
    <property type="method" value="X-ray"/>
    <property type="resolution" value="2.60 A"/>
    <property type="chains" value="L/Z=20-241"/>
</dbReference>
<dbReference type="PDB" id="4QWR">
    <property type="method" value="X-ray"/>
    <property type="resolution" value="2.90 A"/>
    <property type="chains" value="L/Z=20-241"/>
</dbReference>
<dbReference type="PDB" id="4QWS">
    <property type="method" value="X-ray"/>
    <property type="resolution" value="3.00 A"/>
    <property type="chains" value="L/Z=20-241"/>
</dbReference>
<dbReference type="PDB" id="4QWU">
    <property type="method" value="X-ray"/>
    <property type="resolution" value="3.00 A"/>
    <property type="chains" value="L/Z=20-241"/>
</dbReference>
<dbReference type="PDB" id="4QWX">
    <property type="method" value="X-ray"/>
    <property type="resolution" value="2.90 A"/>
    <property type="chains" value="L/Z=20-241"/>
</dbReference>
<dbReference type="PDB" id="4QXJ">
    <property type="method" value="X-ray"/>
    <property type="resolution" value="2.80 A"/>
    <property type="chains" value="L/Z=20-241"/>
</dbReference>
<dbReference type="PDB" id="4QZ0">
    <property type="method" value="X-ray"/>
    <property type="resolution" value="3.00 A"/>
    <property type="chains" value="L/Z=20-241"/>
</dbReference>
<dbReference type="PDB" id="4QZ1">
    <property type="method" value="X-ray"/>
    <property type="resolution" value="3.00 A"/>
    <property type="chains" value="L/Z=20-241"/>
</dbReference>
<dbReference type="PDB" id="4QZ2">
    <property type="method" value="X-ray"/>
    <property type="resolution" value="2.70 A"/>
    <property type="chains" value="L/Z=20-241"/>
</dbReference>
<dbReference type="PDB" id="4QZ3">
    <property type="method" value="X-ray"/>
    <property type="resolution" value="2.80 A"/>
    <property type="chains" value="L/Z=20-241"/>
</dbReference>
<dbReference type="PDB" id="4QZ4">
    <property type="method" value="X-ray"/>
    <property type="resolution" value="3.00 A"/>
    <property type="chains" value="L/Z=20-241"/>
</dbReference>
<dbReference type="PDB" id="4QZ5">
    <property type="method" value="X-ray"/>
    <property type="resolution" value="2.80 A"/>
    <property type="chains" value="L/Z=20-241"/>
</dbReference>
<dbReference type="PDB" id="4QZ6">
    <property type="method" value="X-ray"/>
    <property type="resolution" value="2.90 A"/>
    <property type="chains" value="L/Z=20-241"/>
</dbReference>
<dbReference type="PDB" id="4QZ7">
    <property type="method" value="X-ray"/>
    <property type="resolution" value="2.80 A"/>
    <property type="chains" value="L/Z=20-241"/>
</dbReference>
<dbReference type="PDB" id="4QZW">
    <property type="method" value="X-ray"/>
    <property type="resolution" value="3.00 A"/>
    <property type="chains" value="L/Z=20-241"/>
</dbReference>
<dbReference type="PDB" id="4QZX">
    <property type="method" value="X-ray"/>
    <property type="resolution" value="2.60 A"/>
    <property type="chains" value="L/Z=20-241"/>
</dbReference>
<dbReference type="PDB" id="4QZZ">
    <property type="method" value="X-ray"/>
    <property type="resolution" value="2.90 A"/>
    <property type="chains" value="L/Z=20-241"/>
</dbReference>
<dbReference type="PDB" id="4R00">
    <property type="method" value="X-ray"/>
    <property type="resolution" value="2.80 A"/>
    <property type="chains" value="L/Z=20-241"/>
</dbReference>
<dbReference type="PDB" id="4R02">
    <property type="method" value="X-ray"/>
    <property type="resolution" value="2.50 A"/>
    <property type="chains" value="L/Z=20-241"/>
</dbReference>
<dbReference type="PDB" id="4R17">
    <property type="method" value="X-ray"/>
    <property type="resolution" value="2.10 A"/>
    <property type="chains" value="L/Z=20-241"/>
</dbReference>
<dbReference type="PDB" id="4R18">
    <property type="method" value="X-ray"/>
    <property type="resolution" value="2.40 A"/>
    <property type="chains" value="L/Z=20-241"/>
</dbReference>
<dbReference type="PDB" id="4RUR">
    <property type="method" value="X-ray"/>
    <property type="resolution" value="2.50 A"/>
    <property type="chains" value="L/Z=20-241"/>
</dbReference>
<dbReference type="PDB" id="4V7O">
    <property type="method" value="X-ray"/>
    <property type="resolution" value="3.00 A"/>
    <property type="chains" value="A3/AQ/B1/BM=20-241"/>
</dbReference>
<dbReference type="PDB" id="4X6Z">
    <property type="method" value="X-ray"/>
    <property type="resolution" value="2.70 A"/>
    <property type="chains" value="1/M=1-241"/>
</dbReference>
<dbReference type="PDB" id="4Y69">
    <property type="method" value="X-ray"/>
    <property type="resolution" value="2.90 A"/>
    <property type="chains" value="L/Z=20-241"/>
</dbReference>
<dbReference type="PDB" id="4Y6A">
    <property type="method" value="X-ray"/>
    <property type="resolution" value="2.60 A"/>
    <property type="chains" value="L/Z=20-241"/>
</dbReference>
<dbReference type="PDB" id="4Y6V">
    <property type="method" value="X-ray"/>
    <property type="resolution" value="2.80 A"/>
    <property type="chains" value="L/Z=20-241"/>
</dbReference>
<dbReference type="PDB" id="4Y6Z">
    <property type="method" value="X-ray"/>
    <property type="resolution" value="2.70 A"/>
    <property type="chains" value="L/Z=20-241"/>
</dbReference>
<dbReference type="PDB" id="4Y70">
    <property type="method" value="X-ray"/>
    <property type="resolution" value="2.40 A"/>
    <property type="chains" value="L/Z=20-241"/>
</dbReference>
<dbReference type="PDB" id="4Y74">
    <property type="method" value="X-ray"/>
    <property type="resolution" value="2.70 A"/>
    <property type="chains" value="L/Z=20-241"/>
</dbReference>
<dbReference type="PDB" id="4Y75">
    <property type="method" value="X-ray"/>
    <property type="resolution" value="2.80 A"/>
    <property type="chains" value="L/Z=20-241"/>
</dbReference>
<dbReference type="PDB" id="4Y77">
    <property type="method" value="X-ray"/>
    <property type="resolution" value="2.50 A"/>
    <property type="chains" value="L/Z=20-241"/>
</dbReference>
<dbReference type="PDB" id="4Y78">
    <property type="method" value="X-ray"/>
    <property type="resolution" value="2.80 A"/>
    <property type="chains" value="L/Z=20-241"/>
</dbReference>
<dbReference type="PDB" id="4Y7W">
    <property type="method" value="X-ray"/>
    <property type="resolution" value="2.50 A"/>
    <property type="chains" value="L/Z=20-241"/>
</dbReference>
<dbReference type="PDB" id="4Y7X">
    <property type="method" value="X-ray"/>
    <property type="resolution" value="2.60 A"/>
    <property type="chains" value="L/Z=20-241"/>
</dbReference>
<dbReference type="PDB" id="4Y7Y">
    <property type="method" value="X-ray"/>
    <property type="resolution" value="2.40 A"/>
    <property type="chains" value="L/Z=20-241"/>
</dbReference>
<dbReference type="PDB" id="4Y80">
    <property type="method" value="X-ray"/>
    <property type="resolution" value="2.50 A"/>
    <property type="chains" value="L/Z=20-241"/>
</dbReference>
<dbReference type="PDB" id="4Y81">
    <property type="method" value="X-ray"/>
    <property type="resolution" value="2.80 A"/>
    <property type="chains" value="L/Z=20-241"/>
</dbReference>
<dbReference type="PDB" id="4Y82">
    <property type="method" value="X-ray"/>
    <property type="resolution" value="2.80 A"/>
    <property type="chains" value="L/Z=20-241"/>
</dbReference>
<dbReference type="PDB" id="4Y84">
    <property type="method" value="X-ray"/>
    <property type="resolution" value="2.70 A"/>
    <property type="chains" value="L/Z=20-241"/>
</dbReference>
<dbReference type="PDB" id="4Y8G">
    <property type="method" value="X-ray"/>
    <property type="resolution" value="2.60 A"/>
    <property type="chains" value="L/Z=20-241"/>
</dbReference>
<dbReference type="PDB" id="4Y8H">
    <property type="method" value="X-ray"/>
    <property type="resolution" value="2.50 A"/>
    <property type="chains" value="L/Z=20-241"/>
</dbReference>
<dbReference type="PDB" id="4Y8I">
    <property type="method" value="X-ray"/>
    <property type="resolution" value="2.60 A"/>
    <property type="chains" value="L/Z=20-241"/>
</dbReference>
<dbReference type="PDB" id="4Y8J">
    <property type="method" value="X-ray"/>
    <property type="resolution" value="2.70 A"/>
    <property type="chains" value="L/Z=20-241"/>
</dbReference>
<dbReference type="PDB" id="4Y8K">
    <property type="method" value="X-ray"/>
    <property type="resolution" value="2.60 A"/>
    <property type="chains" value="L/Z=20-241"/>
</dbReference>
<dbReference type="PDB" id="4Y8L">
    <property type="method" value="X-ray"/>
    <property type="resolution" value="2.40 A"/>
    <property type="chains" value="L/Z=20-241"/>
</dbReference>
<dbReference type="PDB" id="4Y8M">
    <property type="method" value="X-ray"/>
    <property type="resolution" value="2.80 A"/>
    <property type="chains" value="L/Z=20-241"/>
</dbReference>
<dbReference type="PDB" id="4Y8N">
    <property type="method" value="X-ray"/>
    <property type="resolution" value="2.60 A"/>
    <property type="chains" value="L/Z=20-241"/>
</dbReference>
<dbReference type="PDB" id="4Y8O">
    <property type="method" value="X-ray"/>
    <property type="resolution" value="2.70 A"/>
    <property type="chains" value="L/Z=20-241"/>
</dbReference>
<dbReference type="PDB" id="4Y8P">
    <property type="method" value="X-ray"/>
    <property type="resolution" value="2.80 A"/>
    <property type="chains" value="L/Z=20-241"/>
</dbReference>
<dbReference type="PDB" id="4Y8Q">
    <property type="method" value="X-ray"/>
    <property type="resolution" value="2.60 A"/>
    <property type="chains" value="L/Z=20-241"/>
</dbReference>
<dbReference type="PDB" id="4Y8R">
    <property type="method" value="X-ray"/>
    <property type="resolution" value="2.70 A"/>
    <property type="chains" value="L/Z=20-241"/>
</dbReference>
<dbReference type="PDB" id="4Y8S">
    <property type="method" value="X-ray"/>
    <property type="resolution" value="2.70 A"/>
    <property type="chains" value="L/Z=20-241"/>
</dbReference>
<dbReference type="PDB" id="4Y8T">
    <property type="method" value="X-ray"/>
    <property type="resolution" value="2.70 A"/>
    <property type="chains" value="L/Z=20-241"/>
</dbReference>
<dbReference type="PDB" id="4Y8U">
    <property type="method" value="X-ray"/>
    <property type="resolution" value="2.90 A"/>
    <property type="chains" value="L/Z=20-241"/>
</dbReference>
<dbReference type="PDB" id="4Y9Y">
    <property type="method" value="X-ray"/>
    <property type="resolution" value="2.80 A"/>
    <property type="chains" value="L/Z=20-241"/>
</dbReference>
<dbReference type="PDB" id="4Y9Z">
    <property type="method" value="X-ray"/>
    <property type="resolution" value="2.80 A"/>
    <property type="chains" value="L/Z=20-241"/>
</dbReference>
<dbReference type="PDB" id="4YA0">
    <property type="method" value="X-ray"/>
    <property type="resolution" value="2.80 A"/>
    <property type="chains" value="L/Z=20-241"/>
</dbReference>
<dbReference type="PDB" id="4YA1">
    <property type="method" value="X-ray"/>
    <property type="resolution" value="2.90 A"/>
    <property type="chains" value="L/Z=20-241"/>
</dbReference>
<dbReference type="PDB" id="4YA2">
    <property type="method" value="X-ray"/>
    <property type="resolution" value="2.70 A"/>
    <property type="chains" value="L/Z=20-241"/>
</dbReference>
<dbReference type="PDB" id="4YA3">
    <property type="method" value="X-ray"/>
    <property type="resolution" value="2.70 A"/>
    <property type="chains" value="L/Z=20-241"/>
</dbReference>
<dbReference type="PDB" id="4YA4">
    <property type="method" value="X-ray"/>
    <property type="resolution" value="2.90 A"/>
    <property type="chains" value="L/Z=20-241"/>
</dbReference>
<dbReference type="PDB" id="4YA5">
    <property type="method" value="X-ray"/>
    <property type="resolution" value="2.50 A"/>
    <property type="chains" value="L/Z=20-241"/>
</dbReference>
<dbReference type="PDB" id="4YA7">
    <property type="method" value="X-ray"/>
    <property type="resolution" value="2.70 A"/>
    <property type="chains" value="L/Z=20-241"/>
</dbReference>
<dbReference type="PDB" id="4YA9">
    <property type="method" value="X-ray"/>
    <property type="resolution" value="2.70 A"/>
    <property type="chains" value="L/Z=20-241"/>
</dbReference>
<dbReference type="PDB" id="4Z1L">
    <property type="method" value="X-ray"/>
    <property type="resolution" value="3.00 A"/>
    <property type="chains" value="L/Z=20-241"/>
</dbReference>
<dbReference type="PDB" id="5A5B">
    <property type="method" value="EM"/>
    <property type="resolution" value="9.50 A"/>
    <property type="chains" value="6=1-241"/>
</dbReference>
<dbReference type="PDB" id="5AHJ">
    <property type="method" value="X-ray"/>
    <property type="resolution" value="2.80 A"/>
    <property type="chains" value="L/Z=20-241"/>
</dbReference>
<dbReference type="PDB" id="5BOU">
    <property type="method" value="X-ray"/>
    <property type="resolution" value="2.60 A"/>
    <property type="chains" value="L/Z=20-241"/>
</dbReference>
<dbReference type="PDB" id="5BXL">
    <property type="method" value="X-ray"/>
    <property type="resolution" value="2.80 A"/>
    <property type="chains" value="L/Z=20-241"/>
</dbReference>
<dbReference type="PDB" id="5BXN">
    <property type="method" value="X-ray"/>
    <property type="resolution" value="2.80 A"/>
    <property type="chains" value="L/Z=20-241"/>
</dbReference>
<dbReference type="PDB" id="5CGF">
    <property type="method" value="X-ray"/>
    <property type="resolution" value="2.80 A"/>
    <property type="chains" value="L/Z=20-241"/>
</dbReference>
<dbReference type="PDB" id="5CGG">
    <property type="method" value="X-ray"/>
    <property type="resolution" value="2.90 A"/>
    <property type="chains" value="L/Z=20-241"/>
</dbReference>
<dbReference type="PDB" id="5CGH">
    <property type="method" value="X-ray"/>
    <property type="resolution" value="2.50 A"/>
    <property type="chains" value="L/Z=20-241"/>
</dbReference>
<dbReference type="PDB" id="5CGI">
    <property type="method" value="X-ray"/>
    <property type="resolution" value="2.80 A"/>
    <property type="chains" value="L/Z=20-241"/>
</dbReference>
<dbReference type="PDB" id="5CZ4">
    <property type="method" value="X-ray"/>
    <property type="resolution" value="2.30 A"/>
    <property type="chains" value="L/Z=20-241"/>
</dbReference>
<dbReference type="PDB" id="5CZ5">
    <property type="method" value="X-ray"/>
    <property type="resolution" value="2.80 A"/>
    <property type="chains" value="L/Z=20-241"/>
</dbReference>
<dbReference type="PDB" id="5CZ6">
    <property type="method" value="X-ray"/>
    <property type="resolution" value="2.70 A"/>
    <property type="chains" value="L/Z=20-241"/>
</dbReference>
<dbReference type="PDB" id="5CZ7">
    <property type="method" value="X-ray"/>
    <property type="resolution" value="2.50 A"/>
    <property type="chains" value="L/Z=20-241"/>
</dbReference>
<dbReference type="PDB" id="5CZ8">
    <property type="method" value="X-ray"/>
    <property type="resolution" value="2.80 A"/>
    <property type="chains" value="L/Z=20-241"/>
</dbReference>
<dbReference type="PDB" id="5CZ9">
    <property type="method" value="X-ray"/>
    <property type="resolution" value="2.90 A"/>
    <property type="chains" value="L/Z=20-241"/>
</dbReference>
<dbReference type="PDB" id="5CZA">
    <property type="method" value="X-ray"/>
    <property type="resolution" value="2.50 A"/>
    <property type="chains" value="L/Z=20-241"/>
</dbReference>
<dbReference type="PDB" id="5D0S">
    <property type="method" value="X-ray"/>
    <property type="resolution" value="2.50 A"/>
    <property type="chains" value="L/Z=20-241"/>
</dbReference>
<dbReference type="PDB" id="5D0T">
    <property type="method" value="X-ray"/>
    <property type="resolution" value="2.60 A"/>
    <property type="chains" value="L/Z=20-241"/>
</dbReference>
<dbReference type="PDB" id="5D0V">
    <property type="method" value="X-ray"/>
    <property type="resolution" value="2.90 A"/>
    <property type="chains" value="L/Z=20-241"/>
</dbReference>
<dbReference type="PDB" id="5D0W">
    <property type="method" value="X-ray"/>
    <property type="resolution" value="2.80 A"/>
    <property type="chains" value="L/Z=20-241"/>
</dbReference>
<dbReference type="PDB" id="5D0X">
    <property type="method" value="X-ray"/>
    <property type="resolution" value="2.60 A"/>
    <property type="chains" value="L/Z=20-241"/>
</dbReference>
<dbReference type="PDB" id="5D0Z">
    <property type="method" value="X-ray"/>
    <property type="resolution" value="2.90 A"/>
    <property type="chains" value="L/Z=20-241"/>
</dbReference>
<dbReference type="PDB" id="5DKI">
    <property type="method" value="X-ray"/>
    <property type="resolution" value="2.80 A"/>
    <property type="chains" value="L/Z=20-241"/>
</dbReference>
<dbReference type="PDB" id="5DKJ">
    <property type="method" value="X-ray"/>
    <property type="resolution" value="2.80 A"/>
    <property type="chains" value="L/Z=20-241"/>
</dbReference>
<dbReference type="PDB" id="5FG7">
    <property type="method" value="X-ray"/>
    <property type="resolution" value="2.70 A"/>
    <property type="chains" value="L/Z=20-241"/>
</dbReference>
<dbReference type="PDB" id="5FG9">
    <property type="method" value="X-ray"/>
    <property type="resolution" value="2.60 A"/>
    <property type="chains" value="L/Z=20-241"/>
</dbReference>
<dbReference type="PDB" id="5FGA">
    <property type="method" value="X-ray"/>
    <property type="resolution" value="2.70 A"/>
    <property type="chains" value="L/Z=20-241"/>
</dbReference>
<dbReference type="PDB" id="5FGD">
    <property type="method" value="X-ray"/>
    <property type="resolution" value="2.80 A"/>
    <property type="chains" value="L/Z=20-241"/>
</dbReference>
<dbReference type="PDB" id="5FGE">
    <property type="method" value="X-ray"/>
    <property type="resolution" value="2.60 A"/>
    <property type="chains" value="L/Z=20-241"/>
</dbReference>
<dbReference type="PDB" id="5FGF">
    <property type="method" value="X-ray"/>
    <property type="resolution" value="2.60 A"/>
    <property type="chains" value="L/Z=20-241"/>
</dbReference>
<dbReference type="PDB" id="5FGG">
    <property type="method" value="X-ray"/>
    <property type="resolution" value="2.70 A"/>
    <property type="chains" value="L/Z=20-241"/>
</dbReference>
<dbReference type="PDB" id="5FGH">
    <property type="method" value="X-ray"/>
    <property type="resolution" value="2.80 A"/>
    <property type="chains" value="L/Z=20-241"/>
</dbReference>
<dbReference type="PDB" id="5FGI">
    <property type="method" value="X-ray"/>
    <property type="resolution" value="2.90 A"/>
    <property type="chains" value="L/Z=20-241"/>
</dbReference>
<dbReference type="PDB" id="5FHS">
    <property type="method" value="X-ray"/>
    <property type="resolution" value="2.70 A"/>
    <property type="chains" value="L/Z=20-241"/>
</dbReference>
<dbReference type="PDB" id="5JHR">
    <property type="method" value="X-ray"/>
    <property type="resolution" value="2.90 A"/>
    <property type="chains" value="L/Z=20-241"/>
</dbReference>
<dbReference type="PDB" id="5JHS">
    <property type="method" value="X-ray"/>
    <property type="resolution" value="3.00 A"/>
    <property type="chains" value="L/Z=20-241"/>
</dbReference>
<dbReference type="PDB" id="5L52">
    <property type="method" value="X-ray"/>
    <property type="resolution" value="2.70 A"/>
    <property type="chains" value="L/Z=20-241"/>
</dbReference>
<dbReference type="PDB" id="5L54">
    <property type="method" value="X-ray"/>
    <property type="resolution" value="2.80 A"/>
    <property type="chains" value="L/Z=20-241"/>
</dbReference>
<dbReference type="PDB" id="5L55">
    <property type="method" value="X-ray"/>
    <property type="resolution" value="2.90 A"/>
    <property type="chains" value="L/Z=20-241"/>
</dbReference>
<dbReference type="PDB" id="5L5A">
    <property type="method" value="X-ray"/>
    <property type="resolution" value="2.40 A"/>
    <property type="chains" value="L/Z=20-241"/>
</dbReference>
<dbReference type="PDB" id="5L5B">
    <property type="method" value="X-ray"/>
    <property type="resolution" value="2.80 A"/>
    <property type="chains" value="L/Z=20-115, L/Z=131-136, L/Z=153-241"/>
</dbReference>
<dbReference type="PDB" id="5L5D">
    <property type="method" value="X-ray"/>
    <property type="resolution" value="2.80 A"/>
    <property type="chains" value="L/Z=20-115, L/Z=131-136, L/Z=153-241"/>
</dbReference>
<dbReference type="PDB" id="5L5E">
    <property type="method" value="X-ray"/>
    <property type="resolution" value="2.90 A"/>
    <property type="chains" value="L/Z=20-115, L/Z=131-136, L/Z=153-241"/>
</dbReference>
<dbReference type="PDB" id="5L5F">
    <property type="method" value="X-ray"/>
    <property type="resolution" value="2.50 A"/>
    <property type="chains" value="L/Z=20-115, L/Z=131-136, L/Z=153-241"/>
</dbReference>
<dbReference type="PDB" id="5L5H">
    <property type="method" value="X-ray"/>
    <property type="resolution" value="2.60 A"/>
    <property type="chains" value="L/Z=20-115, L/Z=131-136, L/Z=153-241"/>
</dbReference>
<dbReference type="PDB" id="5L5I">
    <property type="method" value="X-ray"/>
    <property type="resolution" value="2.90 A"/>
    <property type="chains" value="L/Z=20-115, L/Z=131-136, L/Z=153-241"/>
</dbReference>
<dbReference type="PDB" id="5L5J">
    <property type="method" value="X-ray"/>
    <property type="resolution" value="2.90 A"/>
    <property type="chains" value="L/Z=20-115, L/Z=131-136, L/Z=153-241"/>
</dbReference>
<dbReference type="PDB" id="5L5O">
    <property type="method" value="X-ray"/>
    <property type="resolution" value="2.60 A"/>
    <property type="chains" value="L/Z=20-115, L/Z=131-136, L/Z=153-241"/>
</dbReference>
<dbReference type="PDB" id="5L5P">
    <property type="method" value="X-ray"/>
    <property type="resolution" value="2.80 A"/>
    <property type="chains" value="L/Z=20-115, L/Z=131-136, L/Z=153-241"/>
</dbReference>
<dbReference type="PDB" id="5L5Q">
    <property type="method" value="X-ray"/>
    <property type="resolution" value="2.80 A"/>
    <property type="chains" value="L/Z=20-115, L/Z=131-136, L/Z=153-241"/>
</dbReference>
<dbReference type="PDB" id="5L5R">
    <property type="method" value="X-ray"/>
    <property type="resolution" value="2.90 A"/>
    <property type="chains" value="L/Z=20-115, L/Z=131-136, L/Z=153-241"/>
</dbReference>
<dbReference type="PDB" id="5L5S">
    <property type="method" value="X-ray"/>
    <property type="resolution" value="2.60 A"/>
    <property type="chains" value="L/Z=20-115, L/Z=131-136, L/Z=153-241"/>
</dbReference>
<dbReference type="PDB" id="5L5T">
    <property type="method" value="X-ray"/>
    <property type="resolution" value="2.90 A"/>
    <property type="chains" value="L/Z=20-115, L/Z=131-136, L/Z=153-241"/>
</dbReference>
<dbReference type="PDB" id="5L5U">
    <property type="method" value="X-ray"/>
    <property type="resolution" value="2.60 A"/>
    <property type="chains" value="L/Z=20-115, L/Z=131-136, L/Z=153-241"/>
</dbReference>
<dbReference type="PDB" id="5L5V">
    <property type="method" value="X-ray"/>
    <property type="resolution" value="2.70 A"/>
    <property type="chains" value="L/Z=20-115, L/Z=131-136, L/Z=153-241"/>
</dbReference>
<dbReference type="PDB" id="5L5W">
    <property type="method" value="X-ray"/>
    <property type="resolution" value="2.80 A"/>
    <property type="chains" value="L/Z=20-115, L/Z=131-136, L/Z=153-241"/>
</dbReference>
<dbReference type="PDB" id="5L5X">
    <property type="method" value="X-ray"/>
    <property type="resolution" value="2.90 A"/>
    <property type="chains" value="L/Z=20-115, L/Z=131-136, L/Z=153-241"/>
</dbReference>
<dbReference type="PDB" id="5L5Y">
    <property type="method" value="X-ray"/>
    <property type="resolution" value="2.70 A"/>
    <property type="chains" value="L/Z=20-115, L/Z=131-136, L/Z=153-241"/>
</dbReference>
<dbReference type="PDB" id="5L5Z">
    <property type="method" value="X-ray"/>
    <property type="resolution" value="2.70 A"/>
    <property type="chains" value="L/Z=20-115, L/Z=131-136, L/Z=153-241"/>
</dbReference>
<dbReference type="PDB" id="5L60">
    <property type="method" value="X-ray"/>
    <property type="resolution" value="2.70 A"/>
    <property type="chains" value="L/Z=20-115, L/Z=131-136, L/Z=153-241"/>
</dbReference>
<dbReference type="PDB" id="5L61">
    <property type="method" value="X-ray"/>
    <property type="resolution" value="2.80 A"/>
    <property type="chains" value="L/Z=20-115, L/Z=131-136, L/Z=153-241"/>
</dbReference>
<dbReference type="PDB" id="5L62">
    <property type="method" value="X-ray"/>
    <property type="resolution" value="2.80 A"/>
    <property type="chains" value="L/Z=20-115, L/Z=131-136, L/Z=153-241"/>
</dbReference>
<dbReference type="PDB" id="5L63">
    <property type="method" value="X-ray"/>
    <property type="resolution" value="2.70 A"/>
    <property type="chains" value="L/Z=20-115, L/Z=131-136, L/Z=153-241"/>
</dbReference>
<dbReference type="PDB" id="5L64">
    <property type="method" value="X-ray"/>
    <property type="resolution" value="2.70 A"/>
    <property type="chains" value="L/Z=20-115, L/Z=131-136, L/Z=153-241"/>
</dbReference>
<dbReference type="PDB" id="5L65">
    <property type="method" value="X-ray"/>
    <property type="resolution" value="2.90 A"/>
    <property type="chains" value="L/Z=20-115, L/Z=131-136, L/Z=153-241"/>
</dbReference>
<dbReference type="PDB" id="5L66">
    <property type="method" value="X-ray"/>
    <property type="resolution" value="2.80 A"/>
    <property type="chains" value="L/Z=20-115, L/Z=131-136, L/Z=153-241"/>
</dbReference>
<dbReference type="PDB" id="5L67">
    <property type="method" value="X-ray"/>
    <property type="resolution" value="2.60 A"/>
    <property type="chains" value="L/Z=20-115, L/Z=131-136, L/Z=153-241"/>
</dbReference>
<dbReference type="PDB" id="5L68">
    <property type="method" value="X-ray"/>
    <property type="resolution" value="2.80 A"/>
    <property type="chains" value="L/Z=20-115, L/Z=131-136, L/Z=153-241"/>
</dbReference>
<dbReference type="PDB" id="5L69">
    <property type="method" value="X-ray"/>
    <property type="resolution" value="2.70 A"/>
    <property type="chains" value="L/Z=20-115, L/Z=131-136, L/Z=153-241"/>
</dbReference>
<dbReference type="PDB" id="5L6A">
    <property type="method" value="X-ray"/>
    <property type="resolution" value="2.80 A"/>
    <property type="chains" value="L/Z=20-115, L/Z=131-136, L/Z=153-241"/>
</dbReference>
<dbReference type="PDB" id="5L6B">
    <property type="method" value="X-ray"/>
    <property type="resolution" value="2.60 A"/>
    <property type="chains" value="L/Z=20-115, L/Z=131-136, L/Z=153-241"/>
</dbReference>
<dbReference type="PDB" id="5L6C">
    <property type="method" value="X-ray"/>
    <property type="resolution" value="2.60 A"/>
    <property type="chains" value="L/Z=20-115, L/Z=131-136, L/Z=153-241"/>
</dbReference>
<dbReference type="PDB" id="5LAI">
    <property type="method" value="X-ray"/>
    <property type="resolution" value="2.50 A"/>
    <property type="chains" value="L/Z=20-241"/>
</dbReference>
<dbReference type="PDB" id="5LAJ">
    <property type="method" value="X-ray"/>
    <property type="resolution" value="2.90 A"/>
    <property type="chains" value="L/Z=20-241"/>
</dbReference>
<dbReference type="PDB" id="5LTT">
    <property type="method" value="X-ray"/>
    <property type="resolution" value="2.70 A"/>
    <property type="chains" value="L/Z=20-241"/>
</dbReference>
<dbReference type="PDB" id="5M2B">
    <property type="method" value="X-ray"/>
    <property type="resolution" value="2.70 A"/>
    <property type="chains" value="L/Z=20-115, L/Z=131-136, L/Z=153-241"/>
</dbReference>
<dbReference type="PDB" id="5MP9">
    <property type="method" value="EM"/>
    <property type="resolution" value="4.10 A"/>
    <property type="chains" value="6/m=1-241"/>
</dbReference>
<dbReference type="PDB" id="5MPA">
    <property type="method" value="EM"/>
    <property type="resolution" value="4.50 A"/>
    <property type="chains" value="6/m=1-241"/>
</dbReference>
<dbReference type="PDB" id="5MPB">
    <property type="method" value="EM"/>
    <property type="resolution" value="7.80 A"/>
    <property type="chains" value="6/m=1-241"/>
</dbReference>
<dbReference type="PDB" id="5MPC">
    <property type="method" value="EM"/>
    <property type="resolution" value="7.70 A"/>
    <property type="chains" value="6/m=1-241"/>
</dbReference>
<dbReference type="PDB" id="5NIF">
    <property type="method" value="X-ray"/>
    <property type="resolution" value="3.00 A"/>
    <property type="chains" value="1/M=1-241"/>
</dbReference>
<dbReference type="PDB" id="5WVI">
    <property type="method" value="EM"/>
    <property type="resolution" value="6.30 A"/>
    <property type="chains" value="6/e=1-241"/>
</dbReference>
<dbReference type="PDB" id="5WVK">
    <property type="method" value="EM"/>
    <property type="resolution" value="4.20 A"/>
    <property type="chains" value="6/e=1-241"/>
</dbReference>
<dbReference type="PDB" id="6EF3">
    <property type="method" value="EM"/>
    <property type="resolution" value="4.17 A"/>
    <property type="chains" value="6=1-241"/>
</dbReference>
<dbReference type="PDB" id="6FVT">
    <property type="method" value="EM"/>
    <property type="resolution" value="4.10 A"/>
    <property type="chains" value="6/m=20-241"/>
</dbReference>
<dbReference type="PDB" id="6FVU">
    <property type="method" value="EM"/>
    <property type="resolution" value="4.50 A"/>
    <property type="chains" value="6/m=20-241"/>
</dbReference>
<dbReference type="PDB" id="6FVV">
    <property type="method" value="EM"/>
    <property type="resolution" value="5.40 A"/>
    <property type="chains" value="6/m=20-241"/>
</dbReference>
<dbReference type="PDB" id="6FVW">
    <property type="method" value="EM"/>
    <property type="resolution" value="4.50 A"/>
    <property type="chains" value="6/m=20-241"/>
</dbReference>
<dbReference type="PDB" id="6FVX">
    <property type="method" value="EM"/>
    <property type="resolution" value="4.90 A"/>
    <property type="chains" value="6/m=20-241"/>
</dbReference>
<dbReference type="PDB" id="6FVY">
    <property type="method" value="EM"/>
    <property type="resolution" value="6.10 A"/>
    <property type="chains" value="6/m=20-241"/>
</dbReference>
<dbReference type="PDB" id="6G7F">
    <property type="method" value="X-ray"/>
    <property type="resolution" value="2.70 A"/>
    <property type="chains" value="L/Z=20-241"/>
</dbReference>
<dbReference type="PDB" id="6G8M">
    <property type="method" value="X-ray"/>
    <property type="resolution" value="2.70 A"/>
    <property type="chains" value="L/Z=20-241"/>
</dbReference>
<dbReference type="PDB" id="6G8N">
    <property type="method" value="X-ray"/>
    <property type="resolution" value="3.00 A"/>
    <property type="chains" value="L/Z=20-241"/>
</dbReference>
<dbReference type="PDB" id="6GOP">
    <property type="method" value="X-ray"/>
    <property type="resolution" value="2.90 A"/>
    <property type="chains" value="L/Z=20-241"/>
</dbReference>
<dbReference type="PDB" id="6H39">
    <property type="method" value="X-ray"/>
    <property type="resolution" value="2.50 A"/>
    <property type="chains" value="L/Z=20-241"/>
</dbReference>
<dbReference type="PDB" id="6HTB">
    <property type="method" value="X-ray"/>
    <property type="resolution" value="2.70 A"/>
    <property type="chains" value="L/Z=20-241"/>
</dbReference>
<dbReference type="PDB" id="6HTC">
    <property type="method" value="X-ray"/>
    <property type="resolution" value="2.80 A"/>
    <property type="chains" value="L/Z=20-241"/>
</dbReference>
<dbReference type="PDB" id="6HTD">
    <property type="method" value="X-ray"/>
    <property type="resolution" value="3.00 A"/>
    <property type="chains" value="L/Z=20-241"/>
</dbReference>
<dbReference type="PDB" id="6HTP">
    <property type="method" value="X-ray"/>
    <property type="resolution" value="3.00 A"/>
    <property type="chains" value="L/Z=20-241"/>
</dbReference>
<dbReference type="PDB" id="6HTR">
    <property type="method" value="X-ray"/>
    <property type="resolution" value="2.60 A"/>
    <property type="chains" value="L/Z=20-241"/>
</dbReference>
<dbReference type="PDB" id="6HUB">
    <property type="method" value="X-ray"/>
    <property type="resolution" value="2.90 A"/>
    <property type="chains" value="L/Z=20-241"/>
</dbReference>
<dbReference type="PDB" id="6HUC">
    <property type="method" value="X-ray"/>
    <property type="resolution" value="3.00 A"/>
    <property type="chains" value="L/Z=20-241"/>
</dbReference>
<dbReference type="PDB" id="6HUQ">
    <property type="method" value="X-ray"/>
    <property type="resolution" value="3.00 A"/>
    <property type="chains" value="L/Z=20-241"/>
</dbReference>
<dbReference type="PDB" id="6HUU">
    <property type="method" value="X-ray"/>
    <property type="resolution" value="2.80 A"/>
    <property type="chains" value="L/Z=20-241"/>
</dbReference>
<dbReference type="PDB" id="6HUV">
    <property type="method" value="X-ray"/>
    <property type="resolution" value="3.10 A"/>
    <property type="chains" value="L/Z=20-241"/>
</dbReference>
<dbReference type="PDB" id="6HV3">
    <property type="method" value="X-ray"/>
    <property type="resolution" value="2.70 A"/>
    <property type="chains" value="L/Z=20-241"/>
</dbReference>
<dbReference type="PDB" id="6HV4">
    <property type="method" value="X-ray"/>
    <property type="resolution" value="3.00 A"/>
    <property type="chains" value="L/Z=20-241"/>
</dbReference>
<dbReference type="PDB" id="6HV5">
    <property type="method" value="X-ray"/>
    <property type="resolution" value="3.00 A"/>
    <property type="chains" value="L/Z=20-241"/>
</dbReference>
<dbReference type="PDB" id="6HV7">
    <property type="method" value="X-ray"/>
    <property type="resolution" value="3.40 A"/>
    <property type="chains" value="L/Z=20-241"/>
</dbReference>
<dbReference type="PDB" id="6HVA">
    <property type="method" value="X-ray"/>
    <property type="resolution" value="2.90 A"/>
    <property type="chains" value="L/Z=20-241"/>
</dbReference>
<dbReference type="PDB" id="6HVR">
    <property type="method" value="X-ray"/>
    <property type="resolution" value="2.70 A"/>
    <property type="chains" value="L/Z=20-241"/>
</dbReference>
<dbReference type="PDB" id="6HVS">
    <property type="method" value="X-ray"/>
    <property type="resolution" value="3.10 A"/>
    <property type="chains" value="L/Z=20-241"/>
</dbReference>
<dbReference type="PDB" id="6HVT">
    <property type="method" value="X-ray"/>
    <property type="resolution" value="2.90 A"/>
    <property type="chains" value="L/Z=20-241"/>
</dbReference>
<dbReference type="PDB" id="6HVU">
    <property type="method" value="X-ray"/>
    <property type="resolution" value="2.90 A"/>
    <property type="chains" value="L/Z=20-241"/>
</dbReference>
<dbReference type="PDB" id="6HVV">
    <property type="method" value="X-ray"/>
    <property type="resolution" value="2.70 A"/>
    <property type="chains" value="L/Z=20-241"/>
</dbReference>
<dbReference type="PDB" id="6HVW">
    <property type="method" value="X-ray"/>
    <property type="resolution" value="3.00 A"/>
    <property type="chains" value="L/Z=20-241"/>
</dbReference>
<dbReference type="PDB" id="6HVX">
    <property type="method" value="X-ray"/>
    <property type="resolution" value="2.80 A"/>
    <property type="chains" value="L/Z=20-241"/>
</dbReference>
<dbReference type="PDB" id="6HVY">
    <property type="method" value="X-ray"/>
    <property type="resolution" value="2.70 A"/>
    <property type="chains" value="L/Z=20-241"/>
</dbReference>
<dbReference type="PDB" id="6HW0">
    <property type="method" value="X-ray"/>
    <property type="resolution" value="2.80 A"/>
    <property type="chains" value="L/Z=20-241"/>
</dbReference>
<dbReference type="PDB" id="6HW3">
    <property type="method" value="X-ray"/>
    <property type="resolution" value="2.60 A"/>
    <property type="chains" value="L/Z=20-241"/>
</dbReference>
<dbReference type="PDB" id="6HW4">
    <property type="method" value="X-ray"/>
    <property type="resolution" value="2.90 A"/>
    <property type="chains" value="L/Z=20-241"/>
</dbReference>
<dbReference type="PDB" id="6HW5">
    <property type="method" value="X-ray"/>
    <property type="resolution" value="2.90 A"/>
    <property type="chains" value="L/Z=20-241"/>
</dbReference>
<dbReference type="PDB" id="6HW6">
    <property type="method" value="X-ray"/>
    <property type="resolution" value="2.70 A"/>
    <property type="chains" value="L/Z=20-241"/>
</dbReference>
<dbReference type="PDB" id="6HW7">
    <property type="method" value="X-ray"/>
    <property type="resolution" value="2.70 A"/>
    <property type="chains" value="L/Z=20-241"/>
</dbReference>
<dbReference type="PDB" id="6HW8">
    <property type="method" value="X-ray"/>
    <property type="resolution" value="2.80 A"/>
    <property type="chains" value="L/Z=20-241"/>
</dbReference>
<dbReference type="PDB" id="6HW9">
    <property type="method" value="X-ray"/>
    <property type="resolution" value="2.80 A"/>
    <property type="chains" value="L/Z=20-241"/>
</dbReference>
<dbReference type="PDB" id="6HWA">
    <property type="method" value="X-ray"/>
    <property type="resolution" value="2.80 A"/>
    <property type="chains" value="L/Z=20-241"/>
</dbReference>
<dbReference type="PDB" id="6HWB">
    <property type="method" value="X-ray"/>
    <property type="resolution" value="2.60 A"/>
    <property type="chains" value="L/Z=20-241"/>
</dbReference>
<dbReference type="PDB" id="6HWC">
    <property type="method" value="X-ray"/>
    <property type="resolution" value="2.80 A"/>
    <property type="chains" value="L/Z=20-241"/>
</dbReference>
<dbReference type="PDB" id="6HWD">
    <property type="method" value="X-ray"/>
    <property type="resolution" value="2.80 A"/>
    <property type="chains" value="L/Z=20-241"/>
</dbReference>
<dbReference type="PDB" id="6HWE">
    <property type="method" value="X-ray"/>
    <property type="resolution" value="2.30 A"/>
    <property type="chains" value="L/Z=20-241"/>
</dbReference>
<dbReference type="PDB" id="6HWF">
    <property type="method" value="X-ray"/>
    <property type="resolution" value="2.50 A"/>
    <property type="chains" value="L/Z=20-241"/>
</dbReference>
<dbReference type="PDB" id="6J2C">
    <property type="method" value="EM"/>
    <property type="resolution" value="7.00 A"/>
    <property type="chains" value="6/e=1-241"/>
</dbReference>
<dbReference type="PDB" id="6J2N">
    <property type="method" value="EM"/>
    <property type="resolution" value="7.50 A"/>
    <property type="chains" value="6/e=1-241"/>
</dbReference>
<dbReference type="PDB" id="6J2Q">
    <property type="method" value="EM"/>
    <property type="resolution" value="3.80 A"/>
    <property type="chains" value="6/e=1-241"/>
</dbReference>
<dbReference type="PDB" id="6J2X">
    <property type="method" value="EM"/>
    <property type="resolution" value="3.80 A"/>
    <property type="chains" value="6/e=1-241"/>
</dbReference>
<dbReference type="PDB" id="6J30">
    <property type="method" value="EM"/>
    <property type="resolution" value="4.50 A"/>
    <property type="chains" value="6/e=1-241"/>
</dbReference>
<dbReference type="PDB" id="6ZOU">
    <property type="method" value="X-ray"/>
    <property type="resolution" value="2.90 A"/>
    <property type="chains" value="L/Z=20-241"/>
</dbReference>
<dbReference type="PDB" id="6ZP6">
    <property type="method" value="X-ray"/>
    <property type="resolution" value="2.80 A"/>
    <property type="chains" value="L/Z=20-241"/>
</dbReference>
<dbReference type="PDB" id="6ZP8">
    <property type="method" value="X-ray"/>
    <property type="resolution" value="3.00 A"/>
    <property type="chains" value="L/Z=20-241"/>
</dbReference>
<dbReference type="PDB" id="7LS5">
    <property type="method" value="EM"/>
    <property type="resolution" value="2.74 A"/>
    <property type="chains" value="1/M=1-241"/>
</dbReference>
<dbReference type="PDB" id="7LS6">
    <property type="method" value="EM"/>
    <property type="resolution" value="3.17 A"/>
    <property type="chains" value="M=1-241"/>
</dbReference>
<dbReference type="PDB" id="7O2L">
    <property type="method" value="X-ray"/>
    <property type="resolution" value="3.00 A"/>
    <property type="chains" value="L/Z=20-241"/>
</dbReference>
<dbReference type="PDB" id="7QO3">
    <property type="method" value="EM"/>
    <property type="resolution" value="6.10 A"/>
    <property type="chains" value="6/m=1-241"/>
</dbReference>
<dbReference type="PDB" id="7QO5">
    <property type="method" value="EM"/>
    <property type="resolution" value="6.00 A"/>
    <property type="chains" value="6/m=1-241"/>
</dbReference>
<dbReference type="PDB" id="7TEJ">
    <property type="method" value="EM"/>
    <property type="resolution" value="2.74 A"/>
    <property type="chains" value="1/M=1-241"/>
</dbReference>
<dbReference type="PDB" id="7TEO">
    <property type="method" value="EM"/>
    <property type="resolution" value="2.97 A"/>
    <property type="chains" value="1/M=1-241"/>
</dbReference>
<dbReference type="PDB" id="8BW1">
    <property type="method" value="X-ray"/>
    <property type="resolution" value="3.25 A"/>
    <property type="chains" value="L/Z=20-241"/>
</dbReference>
<dbReference type="PDB" id="8OHZ">
    <property type="method" value="X-ray"/>
    <property type="resolution" value="2.65 A"/>
    <property type="chains" value="L/Z=20-241"/>
</dbReference>
<dbReference type="PDB" id="8OI1">
    <property type="method" value="X-ray"/>
    <property type="resolution" value="2.95 A"/>
    <property type="chains" value="L/Z=20-241"/>
</dbReference>
<dbReference type="PDB" id="8OLR">
    <property type="method" value="X-ray"/>
    <property type="resolution" value="2.80 A"/>
    <property type="chains" value="L/Z=20-241"/>
</dbReference>
<dbReference type="PDB" id="8RHJ">
    <property type="method" value="X-ray"/>
    <property type="resolution" value="3.05 A"/>
    <property type="chains" value="L/Z=20-241"/>
</dbReference>
<dbReference type="PDB" id="8RHK">
    <property type="method" value="X-ray"/>
    <property type="resolution" value="2.80 A"/>
    <property type="chains" value="L/Z=20-241"/>
</dbReference>
<dbReference type="PDB" id="8RHL">
    <property type="method" value="X-ray"/>
    <property type="resolution" value="3.20 A"/>
    <property type="chains" value="L/Z=20-241"/>
</dbReference>
<dbReference type="PDB" id="8RVL">
    <property type="method" value="EM"/>
    <property type="resolution" value="2.14 A"/>
    <property type="chains" value="1/M=1-241"/>
</dbReference>
<dbReference type="PDB" id="8RVO">
    <property type="method" value="EM"/>
    <property type="resolution" value="2.69 A"/>
    <property type="chains" value="1/M=1-241"/>
</dbReference>
<dbReference type="PDB" id="8RVP">
    <property type="method" value="EM"/>
    <property type="resolution" value="2.28 A"/>
    <property type="chains" value="1/M=1-241"/>
</dbReference>
<dbReference type="PDB" id="8RVQ">
    <property type="method" value="EM"/>
    <property type="resolution" value="2.02 A"/>
    <property type="chains" value="1/M=20-241"/>
</dbReference>
<dbReference type="PDB" id="8T08">
    <property type="method" value="EM"/>
    <property type="resolution" value="3.00 A"/>
    <property type="chains" value="M/d=1-241"/>
</dbReference>
<dbReference type="PDB" id="8T0M">
    <property type="method" value="EM"/>
    <property type="resolution" value="2.40 A"/>
    <property type="chains" value="M/a=1-241"/>
</dbReference>
<dbReference type="PDB" id="8U6Y">
    <property type="method" value="EM"/>
    <property type="resolution" value="2.80 A"/>
    <property type="chains" value="M/d=1-241"/>
</dbReference>
<dbReference type="PDB" id="8U7U">
    <property type="method" value="EM"/>
    <property type="resolution" value="2.16 A"/>
    <property type="chains" value="1/M=1-241"/>
</dbReference>
<dbReference type="PDB" id="9EY9">
    <property type="method" value="X-ray"/>
    <property type="resolution" value="3.10 A"/>
    <property type="chains" value="L/Z=20-241"/>
</dbReference>
<dbReference type="PDB" id="9FST">
    <property type="method" value="X-ray"/>
    <property type="resolution" value="2.75 A"/>
    <property type="chains" value="L/Z=20-241"/>
</dbReference>
<dbReference type="PDB" id="9FSV">
    <property type="method" value="X-ray"/>
    <property type="resolution" value="2.75 A"/>
    <property type="chains" value="L/Z=20-241"/>
</dbReference>
<dbReference type="PDB" id="9FT0">
    <property type="method" value="X-ray"/>
    <property type="resolution" value="2.75 A"/>
    <property type="chains" value="L/Z=20-241"/>
</dbReference>
<dbReference type="PDB" id="9FT1">
    <property type="method" value="X-ray"/>
    <property type="resolution" value="2.60 A"/>
    <property type="chains" value="L/Z=20-241"/>
</dbReference>
<dbReference type="PDB" id="9GBK">
    <property type="method" value="EM"/>
    <property type="resolution" value="2.39 A"/>
    <property type="chains" value="1/M=20-241"/>
</dbReference>
<dbReference type="PDBsum" id="1FNT"/>
<dbReference type="PDBsum" id="1G0U"/>
<dbReference type="PDBsum" id="1G65"/>
<dbReference type="PDBsum" id="1JD2"/>
<dbReference type="PDBsum" id="1RYP"/>
<dbReference type="PDBsum" id="1Z7Q"/>
<dbReference type="PDBsum" id="2F16"/>
<dbReference type="PDBsum" id="2FAK"/>
<dbReference type="PDBsum" id="2GPL"/>
<dbReference type="PDBsum" id="2ZCY"/>
<dbReference type="PDBsum" id="3BDM"/>
<dbReference type="PDBsum" id="3D29"/>
<dbReference type="PDBsum" id="3DY3"/>
<dbReference type="PDBsum" id="3DY4"/>
<dbReference type="PDBsum" id="3E47"/>
<dbReference type="PDBsum" id="3GPJ"/>
<dbReference type="PDBsum" id="3GPT"/>
<dbReference type="PDBsum" id="3GPW"/>
<dbReference type="PDBsum" id="3HYE"/>
<dbReference type="PDBsum" id="3JCO"/>
<dbReference type="PDBsum" id="3JCP"/>
<dbReference type="PDBsum" id="3MG0"/>
<dbReference type="PDBsum" id="3MG4"/>
<dbReference type="PDBsum" id="3MG6"/>
<dbReference type="PDBsum" id="3MG7"/>
<dbReference type="PDBsum" id="3MG8"/>
<dbReference type="PDBsum" id="3NZJ"/>
<dbReference type="PDBsum" id="3NZW"/>
<dbReference type="PDBsum" id="3NZX"/>
<dbReference type="PDBsum" id="3OEU"/>
<dbReference type="PDBsum" id="3OEV"/>
<dbReference type="PDBsum" id="3OKJ"/>
<dbReference type="PDBsum" id="3SDI"/>
<dbReference type="PDBsum" id="3SDK"/>
<dbReference type="PDBsum" id="3SHJ"/>
<dbReference type="PDBsum" id="3TDD"/>
<dbReference type="PDBsum" id="3UN4"/>
<dbReference type="PDBsum" id="3UN8"/>
<dbReference type="PDBsum" id="3WXR"/>
<dbReference type="PDBsum" id="4CR2"/>
<dbReference type="PDBsum" id="4CR3"/>
<dbReference type="PDBsum" id="4CR4"/>
<dbReference type="PDBsum" id="4EU2"/>
<dbReference type="PDBsum" id="4FZC"/>
<dbReference type="PDBsum" id="4FZG"/>
<dbReference type="PDBsum" id="4G4S"/>
<dbReference type="PDBsum" id="4GK7"/>
<dbReference type="PDBsum" id="4HNP"/>
<dbReference type="PDBsum" id="4HRC"/>
<dbReference type="PDBsum" id="4HRD"/>
<dbReference type="PDBsum" id="4INR"/>
<dbReference type="PDBsum" id="4INT"/>
<dbReference type="PDBsum" id="4INU"/>
<dbReference type="PDBsum" id="4J70"/>
<dbReference type="PDBsum" id="4JSQ"/>
<dbReference type="PDBsum" id="4JSU"/>
<dbReference type="PDBsum" id="4JT0"/>
<dbReference type="PDBsum" id="4LQI"/>
<dbReference type="PDBsum" id="4LTC"/>
<dbReference type="PDBsum" id="4NNN"/>
<dbReference type="PDBsum" id="4NNW"/>
<dbReference type="PDBsum" id="4NO1"/>
<dbReference type="PDBsum" id="4NO6"/>
<dbReference type="PDBsum" id="4NO8"/>
<dbReference type="PDBsum" id="4NO9"/>
<dbReference type="PDBsum" id="4Q1S"/>
<dbReference type="PDBsum" id="4QBY"/>
<dbReference type="PDBsum" id="4QLQ"/>
<dbReference type="PDBsum" id="4QLS"/>
<dbReference type="PDBsum" id="4QLT"/>
<dbReference type="PDBsum" id="4QLU"/>
<dbReference type="PDBsum" id="4QLV"/>
<dbReference type="PDBsum" id="4QUX"/>
<dbReference type="PDBsum" id="4QUY"/>
<dbReference type="PDBsum" id="4QV0"/>
<dbReference type="PDBsum" id="4QV1"/>
<dbReference type="PDBsum" id="4QV3"/>
<dbReference type="PDBsum" id="4QV4"/>
<dbReference type="PDBsum" id="4QV5"/>
<dbReference type="PDBsum" id="4QV6"/>
<dbReference type="PDBsum" id="4QV7"/>
<dbReference type="PDBsum" id="4QV8"/>
<dbReference type="PDBsum" id="4QV9"/>
<dbReference type="PDBsum" id="4QVL"/>
<dbReference type="PDBsum" id="4QVM"/>
<dbReference type="PDBsum" id="4QVN"/>
<dbReference type="PDBsum" id="4QVP"/>
<dbReference type="PDBsum" id="4QVQ"/>
<dbReference type="PDBsum" id="4QVV"/>
<dbReference type="PDBsum" id="4QVW"/>
<dbReference type="PDBsum" id="4QVY"/>
<dbReference type="PDBsum" id="4QW0"/>
<dbReference type="PDBsum" id="4QW1"/>
<dbReference type="PDBsum" id="4QW3"/>
<dbReference type="PDBsum" id="4QW4"/>
<dbReference type="PDBsum" id="4QW5"/>
<dbReference type="PDBsum" id="4QW6"/>
<dbReference type="PDBsum" id="4QW7"/>
<dbReference type="PDBsum" id="4QWF"/>
<dbReference type="PDBsum" id="4QWG"/>
<dbReference type="PDBsum" id="4QWI"/>
<dbReference type="PDBsum" id="4QWJ"/>
<dbReference type="PDBsum" id="4QWK"/>
<dbReference type="PDBsum" id="4QWL"/>
<dbReference type="PDBsum" id="4QWR"/>
<dbReference type="PDBsum" id="4QWS"/>
<dbReference type="PDBsum" id="4QWU"/>
<dbReference type="PDBsum" id="4QWX"/>
<dbReference type="PDBsum" id="4QXJ"/>
<dbReference type="PDBsum" id="4QZ0"/>
<dbReference type="PDBsum" id="4QZ1"/>
<dbReference type="PDBsum" id="4QZ2"/>
<dbReference type="PDBsum" id="4QZ3"/>
<dbReference type="PDBsum" id="4QZ4"/>
<dbReference type="PDBsum" id="4QZ5"/>
<dbReference type="PDBsum" id="4QZ6"/>
<dbReference type="PDBsum" id="4QZ7"/>
<dbReference type="PDBsum" id="4QZW"/>
<dbReference type="PDBsum" id="4QZX"/>
<dbReference type="PDBsum" id="4QZZ"/>
<dbReference type="PDBsum" id="4R00"/>
<dbReference type="PDBsum" id="4R02"/>
<dbReference type="PDBsum" id="4R17"/>
<dbReference type="PDBsum" id="4R18"/>
<dbReference type="PDBsum" id="4RUR"/>
<dbReference type="PDBsum" id="4V7O"/>
<dbReference type="PDBsum" id="4X6Z"/>
<dbReference type="PDBsum" id="4Y69"/>
<dbReference type="PDBsum" id="4Y6A"/>
<dbReference type="PDBsum" id="4Y6V"/>
<dbReference type="PDBsum" id="4Y6Z"/>
<dbReference type="PDBsum" id="4Y70"/>
<dbReference type="PDBsum" id="4Y74"/>
<dbReference type="PDBsum" id="4Y75"/>
<dbReference type="PDBsum" id="4Y77"/>
<dbReference type="PDBsum" id="4Y78"/>
<dbReference type="PDBsum" id="4Y7W"/>
<dbReference type="PDBsum" id="4Y7X"/>
<dbReference type="PDBsum" id="4Y7Y"/>
<dbReference type="PDBsum" id="4Y80"/>
<dbReference type="PDBsum" id="4Y81"/>
<dbReference type="PDBsum" id="4Y82"/>
<dbReference type="PDBsum" id="4Y84"/>
<dbReference type="PDBsum" id="4Y8G"/>
<dbReference type="PDBsum" id="4Y8H"/>
<dbReference type="PDBsum" id="4Y8I"/>
<dbReference type="PDBsum" id="4Y8J"/>
<dbReference type="PDBsum" id="4Y8K"/>
<dbReference type="PDBsum" id="4Y8L"/>
<dbReference type="PDBsum" id="4Y8M"/>
<dbReference type="PDBsum" id="4Y8N"/>
<dbReference type="PDBsum" id="4Y8O"/>
<dbReference type="PDBsum" id="4Y8P"/>
<dbReference type="PDBsum" id="4Y8Q"/>
<dbReference type="PDBsum" id="4Y8R"/>
<dbReference type="PDBsum" id="4Y8S"/>
<dbReference type="PDBsum" id="4Y8T"/>
<dbReference type="PDBsum" id="4Y8U"/>
<dbReference type="PDBsum" id="4Y9Y"/>
<dbReference type="PDBsum" id="4Y9Z"/>
<dbReference type="PDBsum" id="4YA0"/>
<dbReference type="PDBsum" id="4YA1"/>
<dbReference type="PDBsum" id="4YA2"/>
<dbReference type="PDBsum" id="4YA3"/>
<dbReference type="PDBsum" id="4YA4"/>
<dbReference type="PDBsum" id="4YA5"/>
<dbReference type="PDBsum" id="4YA7"/>
<dbReference type="PDBsum" id="4YA9"/>
<dbReference type="PDBsum" id="4Z1L"/>
<dbReference type="PDBsum" id="5A5B"/>
<dbReference type="PDBsum" id="5AHJ"/>
<dbReference type="PDBsum" id="5BOU"/>
<dbReference type="PDBsum" id="5BXL"/>
<dbReference type="PDBsum" id="5BXN"/>
<dbReference type="PDBsum" id="5CGF"/>
<dbReference type="PDBsum" id="5CGG"/>
<dbReference type="PDBsum" id="5CGH"/>
<dbReference type="PDBsum" id="5CGI"/>
<dbReference type="PDBsum" id="5CZ4"/>
<dbReference type="PDBsum" id="5CZ5"/>
<dbReference type="PDBsum" id="5CZ6"/>
<dbReference type="PDBsum" id="5CZ7"/>
<dbReference type="PDBsum" id="5CZ8"/>
<dbReference type="PDBsum" id="5CZ9"/>
<dbReference type="PDBsum" id="5CZA"/>
<dbReference type="PDBsum" id="5D0S"/>
<dbReference type="PDBsum" id="5D0T"/>
<dbReference type="PDBsum" id="5D0V"/>
<dbReference type="PDBsum" id="5D0W"/>
<dbReference type="PDBsum" id="5D0X"/>
<dbReference type="PDBsum" id="5D0Z"/>
<dbReference type="PDBsum" id="5DKI"/>
<dbReference type="PDBsum" id="5DKJ"/>
<dbReference type="PDBsum" id="5FG7"/>
<dbReference type="PDBsum" id="5FG9"/>
<dbReference type="PDBsum" id="5FGA"/>
<dbReference type="PDBsum" id="5FGD"/>
<dbReference type="PDBsum" id="5FGE"/>
<dbReference type="PDBsum" id="5FGF"/>
<dbReference type="PDBsum" id="5FGG"/>
<dbReference type="PDBsum" id="5FGH"/>
<dbReference type="PDBsum" id="5FGI"/>
<dbReference type="PDBsum" id="5FHS"/>
<dbReference type="PDBsum" id="5JHR"/>
<dbReference type="PDBsum" id="5JHS"/>
<dbReference type="PDBsum" id="5L52"/>
<dbReference type="PDBsum" id="5L54"/>
<dbReference type="PDBsum" id="5L55"/>
<dbReference type="PDBsum" id="5L5A"/>
<dbReference type="PDBsum" id="5L5B"/>
<dbReference type="PDBsum" id="5L5D"/>
<dbReference type="PDBsum" id="5L5E"/>
<dbReference type="PDBsum" id="5L5F"/>
<dbReference type="PDBsum" id="5L5H"/>
<dbReference type="PDBsum" id="5L5I"/>
<dbReference type="PDBsum" id="5L5J"/>
<dbReference type="PDBsum" id="5L5O"/>
<dbReference type="PDBsum" id="5L5P"/>
<dbReference type="PDBsum" id="5L5Q"/>
<dbReference type="PDBsum" id="5L5R"/>
<dbReference type="PDBsum" id="5L5S"/>
<dbReference type="PDBsum" id="5L5T"/>
<dbReference type="PDBsum" id="5L5U"/>
<dbReference type="PDBsum" id="5L5V"/>
<dbReference type="PDBsum" id="5L5W"/>
<dbReference type="PDBsum" id="5L5X"/>
<dbReference type="PDBsum" id="5L5Y"/>
<dbReference type="PDBsum" id="5L5Z"/>
<dbReference type="PDBsum" id="5L60"/>
<dbReference type="PDBsum" id="5L61"/>
<dbReference type="PDBsum" id="5L62"/>
<dbReference type="PDBsum" id="5L63"/>
<dbReference type="PDBsum" id="5L64"/>
<dbReference type="PDBsum" id="5L65"/>
<dbReference type="PDBsum" id="5L66"/>
<dbReference type="PDBsum" id="5L67"/>
<dbReference type="PDBsum" id="5L68"/>
<dbReference type="PDBsum" id="5L69"/>
<dbReference type="PDBsum" id="5L6A"/>
<dbReference type="PDBsum" id="5L6B"/>
<dbReference type="PDBsum" id="5L6C"/>
<dbReference type="PDBsum" id="5LAI"/>
<dbReference type="PDBsum" id="5LAJ"/>
<dbReference type="PDBsum" id="5LTT"/>
<dbReference type="PDBsum" id="5M2B"/>
<dbReference type="PDBsum" id="5MP9"/>
<dbReference type="PDBsum" id="5MPA"/>
<dbReference type="PDBsum" id="5MPB"/>
<dbReference type="PDBsum" id="5MPC"/>
<dbReference type="PDBsum" id="5NIF"/>
<dbReference type="PDBsum" id="5WVI"/>
<dbReference type="PDBsum" id="5WVK"/>
<dbReference type="PDBsum" id="6EF3"/>
<dbReference type="PDBsum" id="6FVT"/>
<dbReference type="PDBsum" id="6FVU"/>
<dbReference type="PDBsum" id="6FVV"/>
<dbReference type="PDBsum" id="6FVW"/>
<dbReference type="PDBsum" id="6FVX"/>
<dbReference type="PDBsum" id="6FVY"/>
<dbReference type="PDBsum" id="6G7F"/>
<dbReference type="PDBsum" id="6G8M"/>
<dbReference type="PDBsum" id="6G8N"/>
<dbReference type="PDBsum" id="6GOP"/>
<dbReference type="PDBsum" id="6H39"/>
<dbReference type="PDBsum" id="6HTB"/>
<dbReference type="PDBsum" id="6HTC"/>
<dbReference type="PDBsum" id="6HTD"/>
<dbReference type="PDBsum" id="6HTP"/>
<dbReference type="PDBsum" id="6HTR"/>
<dbReference type="PDBsum" id="6HUB"/>
<dbReference type="PDBsum" id="6HUC"/>
<dbReference type="PDBsum" id="6HUQ"/>
<dbReference type="PDBsum" id="6HUU"/>
<dbReference type="PDBsum" id="6HUV"/>
<dbReference type="PDBsum" id="6HV3"/>
<dbReference type="PDBsum" id="6HV4"/>
<dbReference type="PDBsum" id="6HV5"/>
<dbReference type="PDBsum" id="6HV7"/>
<dbReference type="PDBsum" id="6HVA"/>
<dbReference type="PDBsum" id="6HVR"/>
<dbReference type="PDBsum" id="6HVS"/>
<dbReference type="PDBsum" id="6HVT"/>
<dbReference type="PDBsum" id="6HVU"/>
<dbReference type="PDBsum" id="6HVV"/>
<dbReference type="PDBsum" id="6HVW"/>
<dbReference type="PDBsum" id="6HVX"/>
<dbReference type="PDBsum" id="6HVY"/>
<dbReference type="PDBsum" id="6HW0"/>
<dbReference type="PDBsum" id="6HW3"/>
<dbReference type="PDBsum" id="6HW4"/>
<dbReference type="PDBsum" id="6HW5"/>
<dbReference type="PDBsum" id="6HW6"/>
<dbReference type="PDBsum" id="6HW7"/>
<dbReference type="PDBsum" id="6HW8"/>
<dbReference type="PDBsum" id="6HW9"/>
<dbReference type="PDBsum" id="6HWA"/>
<dbReference type="PDBsum" id="6HWB"/>
<dbReference type="PDBsum" id="6HWC"/>
<dbReference type="PDBsum" id="6HWD"/>
<dbReference type="PDBsum" id="6HWE"/>
<dbReference type="PDBsum" id="6HWF"/>
<dbReference type="PDBsum" id="6J2C"/>
<dbReference type="PDBsum" id="6J2N"/>
<dbReference type="PDBsum" id="6J2Q"/>
<dbReference type="PDBsum" id="6J2X"/>
<dbReference type="PDBsum" id="6J30"/>
<dbReference type="PDBsum" id="6ZOU"/>
<dbReference type="PDBsum" id="6ZP6"/>
<dbReference type="PDBsum" id="6ZP8"/>
<dbReference type="PDBsum" id="7LS5"/>
<dbReference type="PDBsum" id="7LS6"/>
<dbReference type="PDBsum" id="7O2L"/>
<dbReference type="PDBsum" id="7QO3"/>
<dbReference type="PDBsum" id="7QO5"/>
<dbReference type="PDBsum" id="7TEJ"/>
<dbReference type="PDBsum" id="7TEO"/>
<dbReference type="PDBsum" id="8BW1"/>
<dbReference type="PDBsum" id="8OHZ"/>
<dbReference type="PDBsum" id="8OI1"/>
<dbReference type="PDBsum" id="8OLR"/>
<dbReference type="PDBsum" id="8RHJ"/>
<dbReference type="PDBsum" id="8RHK"/>
<dbReference type="PDBsum" id="8RHL"/>
<dbReference type="PDBsum" id="8RVL"/>
<dbReference type="PDBsum" id="8RVO"/>
<dbReference type="PDBsum" id="8RVP"/>
<dbReference type="PDBsum" id="8RVQ"/>
<dbReference type="PDBsum" id="8T08"/>
<dbReference type="PDBsum" id="8T0M"/>
<dbReference type="PDBsum" id="8U6Y"/>
<dbReference type="PDBsum" id="8U7U"/>
<dbReference type="PDBsum" id="9EY9"/>
<dbReference type="PDBsum" id="9FST"/>
<dbReference type="PDBsum" id="9FSV"/>
<dbReference type="PDBsum" id="9FT0"/>
<dbReference type="PDBsum" id="9FT1"/>
<dbReference type="PDBsum" id="9GBK"/>
<dbReference type="EMDB" id="EMD-14082"/>
<dbReference type="EMDB" id="EMD-14084"/>
<dbReference type="EMDB" id="EMD-19523"/>
<dbReference type="EMDB" id="EMD-19527"/>
<dbReference type="EMDB" id="EMD-19528"/>
<dbReference type="EMDB" id="EMD-19529"/>
<dbReference type="EMDB" id="EMD-23502"/>
<dbReference type="EMDB" id="EMD-23503"/>
<dbReference type="EMDB" id="EMD-25847"/>
<dbReference type="EMDB" id="EMD-25848"/>
<dbReference type="EMDB" id="EMD-3534"/>
<dbReference type="EMDB" id="EMD-3535"/>
<dbReference type="EMDB" id="EMD-3536"/>
<dbReference type="EMDB" id="EMD-3537"/>
<dbReference type="EMDB" id="EMD-40938"/>
<dbReference type="EMDB" id="EMD-40944"/>
<dbReference type="EMDB" id="EMD-41963"/>
<dbReference type="EMDB" id="EMD-41993"/>
<dbReference type="EMDB" id="EMD-4321"/>
<dbReference type="EMDB" id="EMD-4322"/>
<dbReference type="EMDB" id="EMD-4323"/>
<dbReference type="EMDB" id="EMD-4324"/>
<dbReference type="EMDB" id="EMD-51221"/>
<dbReference type="EMDB" id="EMD-6693"/>
<dbReference type="EMDB" id="EMD-6694"/>
<dbReference type="EMDB" id="EMD-9045"/>
<dbReference type="EMDB" id="EMD-9769"/>
<dbReference type="EMDB" id="EMD-9770"/>
<dbReference type="EMDB" id="EMD-9771"/>
<dbReference type="EMDB" id="EMD-9772"/>
<dbReference type="EMDB" id="EMD-9773"/>
<dbReference type="SMR" id="P23724"/>
<dbReference type="BioGRID" id="32656">
    <property type="interactions" value="424"/>
</dbReference>
<dbReference type="ComplexPortal" id="CPX-2262">
    <property type="entry name" value="26S proteasome complex"/>
</dbReference>
<dbReference type="DIP" id="DIP-2821N"/>
<dbReference type="FunCoup" id="P23724">
    <property type="interactions" value="1268"/>
</dbReference>
<dbReference type="IntAct" id="P23724">
    <property type="interactions" value="44"/>
</dbReference>
<dbReference type="MINT" id="P23724"/>
<dbReference type="STRING" id="4932.YBL041W"/>
<dbReference type="BindingDB" id="P23724"/>
<dbReference type="ChEMBL" id="CHEMBL4904"/>
<dbReference type="MEROPS" id="T01.A12"/>
<dbReference type="iPTMnet" id="P23724"/>
<dbReference type="PaxDb" id="4932-YBL041W"/>
<dbReference type="PeptideAtlas" id="P23724"/>
<dbReference type="EnsemblFungi" id="YBL041W_mRNA">
    <property type="protein sequence ID" value="YBL041W"/>
    <property type="gene ID" value="YBL041W"/>
</dbReference>
<dbReference type="GeneID" id="852239"/>
<dbReference type="KEGG" id="sce:YBL041W"/>
<dbReference type="AGR" id="SGD:S000000137"/>
<dbReference type="SGD" id="S000000137">
    <property type="gene designation" value="PRE7"/>
</dbReference>
<dbReference type="VEuPathDB" id="FungiDB:YBL041W"/>
<dbReference type="eggNOG" id="KOG0179">
    <property type="taxonomic scope" value="Eukaryota"/>
</dbReference>
<dbReference type="GeneTree" id="ENSGT00550000075035"/>
<dbReference type="HOGENOM" id="CLU_035750_1_0_1"/>
<dbReference type="InParanoid" id="P23724"/>
<dbReference type="OMA" id="CSGCWCD"/>
<dbReference type="OrthoDB" id="268479at2759"/>
<dbReference type="BioCyc" id="YEAST:G3O-28942-MONOMER"/>
<dbReference type="BioGRID-ORCS" id="852239">
    <property type="hits" value="8 hits in 10 CRISPR screens"/>
</dbReference>
<dbReference type="EvolutionaryTrace" id="P23724"/>
<dbReference type="PRO" id="PR:P23724"/>
<dbReference type="Proteomes" id="UP000002311">
    <property type="component" value="Chromosome II"/>
</dbReference>
<dbReference type="RNAct" id="P23724">
    <property type="molecule type" value="protein"/>
</dbReference>
<dbReference type="GO" id="GO:0005829">
    <property type="term" value="C:cytosol"/>
    <property type="evidence" value="ECO:0007005"/>
    <property type="project" value="SGD"/>
</dbReference>
<dbReference type="GO" id="GO:0005634">
    <property type="term" value="C:nucleus"/>
    <property type="evidence" value="ECO:0007005"/>
    <property type="project" value="SGD"/>
</dbReference>
<dbReference type="GO" id="GO:0000502">
    <property type="term" value="C:proteasome complex"/>
    <property type="evidence" value="ECO:0000353"/>
    <property type="project" value="ComplexPortal"/>
</dbReference>
<dbReference type="GO" id="GO:0019774">
    <property type="term" value="C:proteasome core complex, beta-subunit complex"/>
    <property type="evidence" value="ECO:0000314"/>
    <property type="project" value="SGD"/>
</dbReference>
<dbReference type="GO" id="GO:0010499">
    <property type="term" value="P:proteasomal ubiquitin-independent protein catabolic process"/>
    <property type="evidence" value="ECO:0000314"/>
    <property type="project" value="SGD"/>
</dbReference>
<dbReference type="GO" id="GO:0043161">
    <property type="term" value="P:proteasome-mediated ubiquitin-dependent protein catabolic process"/>
    <property type="evidence" value="ECO:0000314"/>
    <property type="project" value="SGD"/>
</dbReference>
<dbReference type="CDD" id="cd03757">
    <property type="entry name" value="proteasome_beta_type_1"/>
    <property type="match status" value="1"/>
</dbReference>
<dbReference type="FunFam" id="3.60.20.10:FF:000027">
    <property type="entry name" value="Proteasome subunit beta type-6"/>
    <property type="match status" value="1"/>
</dbReference>
<dbReference type="Gene3D" id="3.60.20.10">
    <property type="entry name" value="Glutamine Phosphoribosylpyrophosphate, subunit 1, domain 1"/>
    <property type="match status" value="1"/>
</dbReference>
<dbReference type="InterPro" id="IPR029055">
    <property type="entry name" value="Ntn_hydrolases_N"/>
</dbReference>
<dbReference type="InterPro" id="IPR016050">
    <property type="entry name" value="Proteasome_bsu_CS"/>
</dbReference>
<dbReference type="InterPro" id="IPR001353">
    <property type="entry name" value="Proteasome_sua/b"/>
</dbReference>
<dbReference type="InterPro" id="IPR023333">
    <property type="entry name" value="Proteasome_suB-type"/>
</dbReference>
<dbReference type="PANTHER" id="PTHR32194">
    <property type="entry name" value="METALLOPROTEASE TLDD"/>
    <property type="match status" value="1"/>
</dbReference>
<dbReference type="PANTHER" id="PTHR32194:SF2">
    <property type="entry name" value="PROTEASOME SUBUNIT BETA TYPE-1"/>
    <property type="match status" value="1"/>
</dbReference>
<dbReference type="Pfam" id="PF00227">
    <property type="entry name" value="Proteasome"/>
    <property type="match status" value="1"/>
</dbReference>
<dbReference type="SUPFAM" id="SSF56235">
    <property type="entry name" value="N-terminal nucleophile aminohydrolases (Ntn hydrolases)"/>
    <property type="match status" value="1"/>
</dbReference>
<dbReference type="PROSITE" id="PS00854">
    <property type="entry name" value="PROTEASOME_BETA_1"/>
    <property type="match status" value="1"/>
</dbReference>
<dbReference type="PROSITE" id="PS51476">
    <property type="entry name" value="PROTEASOME_BETA_2"/>
    <property type="match status" value="1"/>
</dbReference>
<evidence type="ECO:0000255" key="1">
    <source>
        <dbReference type="PROSITE-ProRule" id="PRU00809"/>
    </source>
</evidence>
<evidence type="ECO:0000269" key="2">
    <source>
    </source>
</evidence>
<evidence type="ECO:0007829" key="3">
    <source>
        <dbReference type="PDB" id="1G65"/>
    </source>
</evidence>
<evidence type="ECO:0007829" key="4">
    <source>
        <dbReference type="PDB" id="1RYP"/>
    </source>
</evidence>
<evidence type="ECO:0007829" key="5">
    <source>
        <dbReference type="PDB" id="4R17"/>
    </source>
</evidence>
<evidence type="ECO:0007829" key="6">
    <source>
        <dbReference type="PDB" id="8RVL"/>
    </source>
</evidence>
<evidence type="ECO:0007829" key="7">
    <source>
        <dbReference type="PDB" id="8RVQ"/>
    </source>
</evidence>
<organism>
    <name type="scientific">Saccharomyces cerevisiae (strain ATCC 204508 / S288c)</name>
    <name type="common">Baker's yeast</name>
    <dbReference type="NCBI Taxonomy" id="559292"/>
    <lineage>
        <taxon>Eukaryota</taxon>
        <taxon>Fungi</taxon>
        <taxon>Dikarya</taxon>
        <taxon>Ascomycota</taxon>
        <taxon>Saccharomycotina</taxon>
        <taxon>Saccharomycetes</taxon>
        <taxon>Saccharomycetales</taxon>
        <taxon>Saccharomycetaceae</taxon>
        <taxon>Saccharomyces</taxon>
    </lineage>
</organism>
<keyword id="KW-0002">3D-structure</keyword>
<keyword id="KW-0963">Cytoplasm</keyword>
<keyword id="KW-0539">Nucleus</keyword>
<keyword id="KW-0647">Proteasome</keyword>
<keyword id="KW-1185">Reference proteome</keyword>
<proteinExistence type="evidence at protein level"/>
<comment type="function">
    <text>Non-catalytic component of the proteasome which degrades poly-ubiquitinated proteins in the cytoplasm and in the nucleus. It is essential for the regulated turnover of proteins and for the removal of misfolded proteins. The proteasome is a multicatalytic proteinase complex that is characterized by its ability to cleave peptides with Arg, Phe, Tyr, Leu, and Glu adjacent to the leaving group at neutral or slightly basic pH. It has an ATP-dependent proteolytic activity.</text>
</comment>
<comment type="subunit">
    <text evidence="2">The 26S proteasome consists of a 20S proteasome core and two 19S regulatory subunits. The 20S proteasome core is composed of 28 subunits that are arranged in four stacked rings, resulting in a barrel-shaped structure. The two end rings are each formed by seven alpha subunits, and the two central rings are each formed by seven beta subunits. The catalytic chamber with the active sites is on the inside of the barrel.</text>
</comment>
<comment type="interaction">
    <interactant intactId="EBI-13984">
        <id>P23724</id>
    </interactant>
    <interactant intactId="EBI-14001">
        <id>P30656</id>
        <label>PRE2</label>
    </interactant>
    <organismsDiffer>false</organismsDiffer>
    <experiments>2</experiments>
</comment>
<comment type="subcellular location">
    <subcellularLocation>
        <location>Cytoplasm</location>
    </subcellularLocation>
    <subcellularLocation>
        <location>Nucleus</location>
    </subcellularLocation>
</comment>
<comment type="similarity">
    <text evidence="1">Belongs to the peptidase T1B family.</text>
</comment>
<accession>P23724</accession>
<accession>D6VPV7</accession>